<protein>
    <recommendedName>
        <fullName>Tyrosine-protein kinase ZAP-70</fullName>
        <ecNumber>2.7.10.2</ecNumber>
    </recommendedName>
    <alternativeName>
        <fullName>70 kDa zeta-chain associated protein</fullName>
    </alternativeName>
    <alternativeName>
        <fullName>Syk-related tyrosine kinase</fullName>
    </alternativeName>
</protein>
<proteinExistence type="evidence at protein level"/>
<gene>
    <name type="primary">ZAP70</name>
    <name type="synonym">SRK</name>
</gene>
<sequence length="619" mass="69872">MPDPAAHLPFFYGSISRAEAEEHLKLAGMADGLFLLRQCLRSLGGYVLSLVHDVRFHHFPIERQLNGTYAIAGGKAHCGPAELCEFYSRDPDGLPCNLRKPCNRPSGLEPQPGVFDCLRDAMVRDYVRQTWKLEGEALEQAIISQAPQVEKLIATTAHERMPWYHSSLTREEAERKLYSGAQTDGKFLLRPRKEQGTYALSLIYGKTVYHYLISQDKAGKYCIPEGTKFDTLWQLVEYLKLKADGLIYCLKEACPNSSASNASGAAAPTLPAHPSTLTHPQRRIDTLNSDGYTPEPARITSPDKPRPMPMDTSVYESPYSDPEELKDKKLFLKRDNLLIADIELGCGNFGSVRQGVYRMRKKQIDVAIKVLKQGTEKADTEEMMREAQIMHQLDNPYIVRLIGVCQAEALMLVMEMAGGGPLHKFLVGKREEIPVSNVAELLHQVSMGMKYLEEKNFVHRDLAARNVLLVNRHYAKISDFGLSKALGADDSYYTARSAGKWPLKWYAPECINFRKFSSRSDVWSYGVTMWEALSYGQKPYKKMKGPEVMAFIEQGKRMECPPECPPELYALMSDCWIYKWEDRPDFLTVEQRMRACYYSLASKVEGPPGSTQKAEAACA</sequence>
<keyword id="KW-0002">3D-structure</keyword>
<keyword id="KW-0007">Acetylation</keyword>
<keyword id="KW-1064">Adaptive immunity</keyword>
<keyword id="KW-0025">Alternative splicing</keyword>
<keyword id="KW-0067">ATP-binding</keyword>
<keyword id="KW-1003">Cell membrane</keyword>
<keyword id="KW-0963">Cytoplasm</keyword>
<keyword id="KW-0225">Disease variant</keyword>
<keyword id="KW-0391">Immunity</keyword>
<keyword id="KW-1017">Isopeptide bond</keyword>
<keyword id="KW-0418">Kinase</keyword>
<keyword id="KW-0472">Membrane</keyword>
<keyword id="KW-0547">Nucleotide-binding</keyword>
<keyword id="KW-0597">Phosphoprotein</keyword>
<keyword id="KW-1267">Proteomics identification</keyword>
<keyword id="KW-1185">Reference proteome</keyword>
<keyword id="KW-0677">Repeat</keyword>
<keyword id="KW-0705">SCID</keyword>
<keyword id="KW-0727">SH2 domain</keyword>
<keyword id="KW-0808">Transferase</keyword>
<keyword id="KW-0829">Tyrosine-protein kinase</keyword>
<keyword id="KW-0832">Ubl conjugation</keyword>
<dbReference type="EC" id="2.7.10.2"/>
<dbReference type="EMBL" id="L05148">
    <property type="status" value="NOT_ANNOTATED_CDS"/>
    <property type="molecule type" value="mRNA"/>
</dbReference>
<dbReference type="EMBL" id="AB083211">
    <property type="protein sequence ID" value="BAC43747.1"/>
    <property type="molecule type" value="mRNA"/>
</dbReference>
<dbReference type="EMBL" id="AC016699">
    <property type="protein sequence ID" value="AAX93187.1"/>
    <property type="molecule type" value="Genomic_DNA"/>
</dbReference>
<dbReference type="EMBL" id="BC039039">
    <property type="protein sequence ID" value="AAH39039.1"/>
    <property type="molecule type" value="mRNA"/>
</dbReference>
<dbReference type="EMBL" id="BC053878">
    <property type="protein sequence ID" value="AAH53878.1"/>
    <property type="molecule type" value="mRNA"/>
</dbReference>
<dbReference type="CCDS" id="CCDS33254.1">
    <molecule id="P43403-1"/>
</dbReference>
<dbReference type="CCDS" id="CCDS33255.1">
    <molecule id="P43403-2"/>
</dbReference>
<dbReference type="PIR" id="A44266">
    <property type="entry name" value="A44266"/>
</dbReference>
<dbReference type="PIR" id="A49955">
    <property type="entry name" value="A49955"/>
</dbReference>
<dbReference type="RefSeq" id="NP_001070.2">
    <molecule id="P43403-1"/>
    <property type="nucleotide sequence ID" value="NM_001079.3"/>
</dbReference>
<dbReference type="RefSeq" id="NP_001365523.1">
    <molecule id="P43403-1"/>
    <property type="nucleotide sequence ID" value="NM_001378594.1"/>
</dbReference>
<dbReference type="RefSeq" id="NP_997402.1">
    <molecule id="P43403-2"/>
    <property type="nucleotide sequence ID" value="NM_207519.2"/>
</dbReference>
<dbReference type="RefSeq" id="XP_054188975.1">
    <molecule id="P43403-2"/>
    <property type="nucleotide sequence ID" value="XM_054333000.1"/>
</dbReference>
<dbReference type="RefSeq" id="XP_054199775.1">
    <molecule id="P43403-2"/>
    <property type="nucleotide sequence ID" value="XM_054343800.1"/>
</dbReference>
<dbReference type="PDB" id="1FBV">
    <property type="method" value="X-ray"/>
    <property type="resolution" value="2.90 A"/>
    <property type="chains" value="B=289-297"/>
</dbReference>
<dbReference type="PDB" id="1M61">
    <property type="method" value="X-ray"/>
    <property type="resolution" value="2.50 A"/>
    <property type="chains" value="A=1-256"/>
</dbReference>
<dbReference type="PDB" id="1U59">
    <property type="method" value="X-ray"/>
    <property type="resolution" value="2.30 A"/>
    <property type="chains" value="A=327-606"/>
</dbReference>
<dbReference type="PDB" id="2CBL">
    <property type="method" value="X-ray"/>
    <property type="resolution" value="2.10 A"/>
    <property type="chains" value="B=286-297"/>
</dbReference>
<dbReference type="PDB" id="2OQ1">
    <property type="method" value="X-ray"/>
    <property type="resolution" value="1.90 A"/>
    <property type="chains" value="A=3-256"/>
</dbReference>
<dbReference type="PDB" id="2OZO">
    <property type="method" value="X-ray"/>
    <property type="resolution" value="2.60 A"/>
    <property type="chains" value="A=1-606"/>
</dbReference>
<dbReference type="PDB" id="2Y1N">
    <property type="method" value="X-ray"/>
    <property type="resolution" value="2.00 A"/>
    <property type="chains" value="B/D=286-297"/>
</dbReference>
<dbReference type="PDB" id="3ZNI">
    <property type="method" value="X-ray"/>
    <property type="resolution" value="2.21 A"/>
    <property type="chains" value="B/F/J/N=286-297"/>
</dbReference>
<dbReference type="PDB" id="4A4B">
    <property type="method" value="X-ray"/>
    <property type="resolution" value="2.79 A"/>
    <property type="chains" value="B=286-297"/>
</dbReference>
<dbReference type="PDB" id="4A4C">
    <property type="method" value="X-ray"/>
    <property type="resolution" value="2.70 A"/>
    <property type="chains" value="B=286-297"/>
</dbReference>
<dbReference type="PDB" id="4K2R">
    <property type="method" value="X-ray"/>
    <property type="resolution" value="3.00 A"/>
    <property type="chains" value="A=1-606"/>
</dbReference>
<dbReference type="PDB" id="4XZ0">
    <property type="method" value="X-ray"/>
    <property type="resolution" value="2.00 A"/>
    <property type="chains" value="A=1-259"/>
</dbReference>
<dbReference type="PDB" id="4XZ1">
    <property type="method" value="X-ray"/>
    <property type="resolution" value="2.80 A"/>
    <property type="chains" value="A=1-259"/>
</dbReference>
<dbReference type="PDB" id="5O76">
    <property type="method" value="X-ray"/>
    <property type="resolution" value="2.47 A"/>
    <property type="chains" value="B/D=286-297"/>
</dbReference>
<dbReference type="PDB" id="7SIY">
    <property type="method" value="X-ray"/>
    <property type="resolution" value="1.48 A"/>
    <property type="chains" value="Z=292-296"/>
</dbReference>
<dbReference type="PDBsum" id="1FBV"/>
<dbReference type="PDBsum" id="1M61"/>
<dbReference type="PDBsum" id="1U59"/>
<dbReference type="PDBsum" id="2CBL"/>
<dbReference type="PDBsum" id="2OQ1"/>
<dbReference type="PDBsum" id="2OZO"/>
<dbReference type="PDBsum" id="2Y1N"/>
<dbReference type="PDBsum" id="3ZNI"/>
<dbReference type="PDBsum" id="4A4B"/>
<dbReference type="PDBsum" id="4A4C"/>
<dbReference type="PDBsum" id="4K2R"/>
<dbReference type="PDBsum" id="4XZ0"/>
<dbReference type="PDBsum" id="4XZ1"/>
<dbReference type="PDBsum" id="5O76"/>
<dbReference type="PDBsum" id="7SIY"/>
<dbReference type="SMR" id="P43403"/>
<dbReference type="BioGRID" id="113367">
    <property type="interactions" value="72"/>
</dbReference>
<dbReference type="CORUM" id="P43403"/>
<dbReference type="DIP" id="DIP-38781N"/>
<dbReference type="ELM" id="P43403"/>
<dbReference type="FunCoup" id="P43403">
    <property type="interactions" value="588"/>
</dbReference>
<dbReference type="IntAct" id="P43403">
    <property type="interactions" value="76"/>
</dbReference>
<dbReference type="MINT" id="P43403"/>
<dbReference type="STRING" id="9606.ENSP00000264972"/>
<dbReference type="BindingDB" id="P43403"/>
<dbReference type="ChEMBL" id="CHEMBL2803"/>
<dbReference type="DrugBank" id="DB12010">
    <property type="generic name" value="Fostamatinib"/>
</dbReference>
<dbReference type="DrugBank" id="DB02010">
    <property type="generic name" value="Staurosporine"/>
</dbReference>
<dbReference type="DrugCentral" id="P43403"/>
<dbReference type="GuidetoPHARMACOLOGY" id="2285"/>
<dbReference type="GlyCosmos" id="P43403">
    <property type="glycosylation" value="1 site, 1 glycan"/>
</dbReference>
<dbReference type="GlyGen" id="P43403">
    <property type="glycosylation" value="1 site, 1 O-linked glycan (1 site)"/>
</dbReference>
<dbReference type="iPTMnet" id="P43403"/>
<dbReference type="MetOSite" id="P43403"/>
<dbReference type="PhosphoSitePlus" id="P43403"/>
<dbReference type="BioMuta" id="ZAP70"/>
<dbReference type="DMDM" id="1177044"/>
<dbReference type="jPOST" id="P43403"/>
<dbReference type="MassIVE" id="P43403"/>
<dbReference type="PaxDb" id="9606-ENSP00000264972"/>
<dbReference type="PeptideAtlas" id="P43403"/>
<dbReference type="ProteomicsDB" id="55631">
    <molecule id="P43403-1"/>
</dbReference>
<dbReference type="ProteomicsDB" id="55632">
    <molecule id="P43403-2"/>
</dbReference>
<dbReference type="ProteomicsDB" id="55633">
    <molecule id="P43403-3"/>
</dbReference>
<dbReference type="Antibodypedia" id="685">
    <property type="antibodies" value="2283 antibodies from 50 providers"/>
</dbReference>
<dbReference type="CPTC" id="P43403">
    <property type="antibodies" value="1 antibody"/>
</dbReference>
<dbReference type="DNASU" id="7535"/>
<dbReference type="Ensembl" id="ENST00000264972.10">
    <molecule id="P43403-1"/>
    <property type="protein sequence ID" value="ENSP00000264972.5"/>
    <property type="gene ID" value="ENSG00000115085.16"/>
</dbReference>
<dbReference type="Ensembl" id="ENST00000451498.2">
    <molecule id="P43403-2"/>
    <property type="protein sequence ID" value="ENSP00000400475.2"/>
    <property type="gene ID" value="ENSG00000115085.16"/>
</dbReference>
<dbReference type="Ensembl" id="ENST00000698508.2">
    <molecule id="P43403-1"/>
    <property type="protein sequence ID" value="ENSP00000513759.1"/>
    <property type="gene ID" value="ENSG00000115085.16"/>
</dbReference>
<dbReference type="Ensembl" id="ENST00000708152.1">
    <molecule id="P43403-1"/>
    <property type="protein sequence ID" value="ENSP00000517108.1"/>
    <property type="gene ID" value="ENSG00000291603.1"/>
</dbReference>
<dbReference type="Ensembl" id="ENST00000708154.1">
    <molecule id="P43403-1"/>
    <property type="protein sequence ID" value="ENSP00000517109.1"/>
    <property type="gene ID" value="ENSG00000291603.1"/>
</dbReference>
<dbReference type="Ensembl" id="ENST00000708159.1">
    <molecule id="P43403-2"/>
    <property type="protein sequence ID" value="ENSP00000517110.1"/>
    <property type="gene ID" value="ENSG00000291603.1"/>
</dbReference>
<dbReference type="GeneID" id="7535"/>
<dbReference type="KEGG" id="hsa:7535"/>
<dbReference type="MANE-Select" id="ENST00000264972.10">
    <property type="protein sequence ID" value="ENSP00000264972.5"/>
    <property type="RefSeq nucleotide sequence ID" value="NM_001079.4"/>
    <property type="RefSeq protein sequence ID" value="NP_001070.2"/>
</dbReference>
<dbReference type="UCSC" id="uc002syd.2">
    <molecule id="P43403-1"/>
    <property type="organism name" value="human"/>
</dbReference>
<dbReference type="AGR" id="HGNC:12858"/>
<dbReference type="CTD" id="7535"/>
<dbReference type="DisGeNET" id="7535"/>
<dbReference type="GeneCards" id="ZAP70"/>
<dbReference type="GeneReviews" id="ZAP70"/>
<dbReference type="HGNC" id="HGNC:12858">
    <property type="gene designation" value="ZAP70"/>
</dbReference>
<dbReference type="HPA" id="ENSG00000115085">
    <property type="expression patterns" value="Tissue enhanced (bone marrow, lymphoid tissue)"/>
</dbReference>
<dbReference type="MalaCards" id="ZAP70"/>
<dbReference type="MIM" id="176947">
    <property type="type" value="gene"/>
</dbReference>
<dbReference type="MIM" id="269840">
    <property type="type" value="phenotype"/>
</dbReference>
<dbReference type="MIM" id="617006">
    <property type="type" value="phenotype"/>
</dbReference>
<dbReference type="neXtProt" id="NX_P43403"/>
<dbReference type="OpenTargets" id="ENSG00000115085"/>
<dbReference type="Orphanet" id="911">
    <property type="disease" value="Combined immunodeficiency due to ZAP70 deficiency"/>
</dbReference>
<dbReference type="PharmGKB" id="PA37447"/>
<dbReference type="VEuPathDB" id="HostDB:ENSG00000115085"/>
<dbReference type="eggNOG" id="ENOG502QT06">
    <property type="taxonomic scope" value="Eukaryota"/>
</dbReference>
<dbReference type="GeneTree" id="ENSGT00940000159185"/>
<dbReference type="HOGENOM" id="CLU_000288_7_2_1"/>
<dbReference type="InParanoid" id="P43403"/>
<dbReference type="OMA" id="ACPNTSA"/>
<dbReference type="OrthoDB" id="535945at2759"/>
<dbReference type="PAN-GO" id="P43403">
    <property type="GO annotations" value="6 GO annotations based on evolutionary models"/>
</dbReference>
<dbReference type="PhylomeDB" id="P43403"/>
<dbReference type="TreeFam" id="TF351629"/>
<dbReference type="BRENDA" id="2.7.10.2">
    <property type="organism ID" value="2681"/>
</dbReference>
<dbReference type="PathwayCommons" id="P43403"/>
<dbReference type="Reactome" id="R-HSA-202430">
    <property type="pathway name" value="Translocation of ZAP-70 to Immunological synapse"/>
</dbReference>
<dbReference type="Reactome" id="R-HSA-202433">
    <property type="pathway name" value="Generation of second messenger molecules"/>
</dbReference>
<dbReference type="Reactome" id="R-HSA-9013407">
    <property type="pathway name" value="RHOH GTPase cycle"/>
</dbReference>
<dbReference type="Reactome" id="R-HSA-9725371">
    <property type="pathway name" value="Nuclear events stimulated by ALK signaling in cancer"/>
</dbReference>
<dbReference type="SignaLink" id="P43403"/>
<dbReference type="SIGNOR" id="P43403"/>
<dbReference type="BioGRID-ORCS" id="7535">
    <property type="hits" value="20 hits in 1186 CRISPR screens"/>
</dbReference>
<dbReference type="ChiTaRS" id="ZAP70">
    <property type="organism name" value="human"/>
</dbReference>
<dbReference type="EvolutionaryTrace" id="P43403"/>
<dbReference type="GeneWiki" id="ZAP70"/>
<dbReference type="GenomeRNAi" id="7535"/>
<dbReference type="Pharos" id="P43403">
    <property type="development level" value="Tchem"/>
</dbReference>
<dbReference type="PRO" id="PR:P43403"/>
<dbReference type="Proteomes" id="UP000005640">
    <property type="component" value="Chromosome 2"/>
</dbReference>
<dbReference type="RNAct" id="P43403">
    <property type="molecule type" value="protein"/>
</dbReference>
<dbReference type="Bgee" id="ENSG00000115085">
    <property type="expression patterns" value="Expressed in granulocyte and 111 other cell types or tissues"/>
</dbReference>
<dbReference type="GO" id="GO:0005911">
    <property type="term" value="C:cell-cell junction"/>
    <property type="evidence" value="ECO:0007669"/>
    <property type="project" value="Ensembl"/>
</dbReference>
<dbReference type="GO" id="GO:0005737">
    <property type="term" value="C:cytoplasm"/>
    <property type="evidence" value="ECO:0000314"/>
    <property type="project" value="UniProt"/>
</dbReference>
<dbReference type="GO" id="GO:0005829">
    <property type="term" value="C:cytosol"/>
    <property type="evidence" value="ECO:0000304"/>
    <property type="project" value="Reactome"/>
</dbReference>
<dbReference type="GO" id="GO:0001772">
    <property type="term" value="C:immunological synapse"/>
    <property type="evidence" value="ECO:0007669"/>
    <property type="project" value="Ensembl"/>
</dbReference>
<dbReference type="GO" id="GO:0005886">
    <property type="term" value="C:plasma membrane"/>
    <property type="evidence" value="ECO:0000314"/>
    <property type="project" value="BHF-UCL"/>
</dbReference>
<dbReference type="GO" id="GO:0042101">
    <property type="term" value="C:T cell receptor complex"/>
    <property type="evidence" value="ECO:0000314"/>
    <property type="project" value="MGI"/>
</dbReference>
<dbReference type="GO" id="GO:0005524">
    <property type="term" value="F:ATP binding"/>
    <property type="evidence" value="ECO:0000303"/>
    <property type="project" value="UniProtKB"/>
</dbReference>
<dbReference type="GO" id="GO:0004715">
    <property type="term" value="F:non-membrane spanning protein tyrosine kinase activity"/>
    <property type="evidence" value="ECO:0000314"/>
    <property type="project" value="UniProtKB"/>
</dbReference>
<dbReference type="GO" id="GO:0001784">
    <property type="term" value="F:phosphotyrosine residue binding"/>
    <property type="evidence" value="ECO:0007669"/>
    <property type="project" value="Ensembl"/>
</dbReference>
<dbReference type="GO" id="GO:0004713">
    <property type="term" value="F:protein tyrosine kinase activity"/>
    <property type="evidence" value="ECO:0000314"/>
    <property type="project" value="UniProt"/>
</dbReference>
<dbReference type="GO" id="GO:0002250">
    <property type="term" value="P:adaptive immune response"/>
    <property type="evidence" value="ECO:0000304"/>
    <property type="project" value="UniProtKB"/>
</dbReference>
<dbReference type="GO" id="GO:0042113">
    <property type="term" value="P:B cell activation"/>
    <property type="evidence" value="ECO:0000304"/>
    <property type="project" value="UniProtKB"/>
</dbReference>
<dbReference type="GO" id="GO:0043366">
    <property type="term" value="P:beta selection"/>
    <property type="evidence" value="ECO:0007669"/>
    <property type="project" value="Ensembl"/>
</dbReference>
<dbReference type="GO" id="GO:0019722">
    <property type="term" value="P:calcium-mediated signaling"/>
    <property type="evidence" value="ECO:0007669"/>
    <property type="project" value="Ensembl"/>
</dbReference>
<dbReference type="GO" id="GO:0006955">
    <property type="term" value="P:immune response"/>
    <property type="evidence" value="ECO:0000314"/>
    <property type="project" value="UniProtKB"/>
</dbReference>
<dbReference type="GO" id="GO:0035556">
    <property type="term" value="P:intracellular signal transduction"/>
    <property type="evidence" value="ECO:0000303"/>
    <property type="project" value="UniProtKB"/>
</dbReference>
<dbReference type="GO" id="GO:0045060">
    <property type="term" value="P:negative thymic T cell selection"/>
    <property type="evidence" value="ECO:0007669"/>
    <property type="project" value="Ensembl"/>
</dbReference>
<dbReference type="GO" id="GO:0018108">
    <property type="term" value="P:peptidyl-tyrosine phosphorylation"/>
    <property type="evidence" value="ECO:0000314"/>
    <property type="project" value="MGI"/>
</dbReference>
<dbReference type="GO" id="GO:0046638">
    <property type="term" value="P:positive regulation of alpha-beta T cell differentiation"/>
    <property type="evidence" value="ECO:0007669"/>
    <property type="project" value="Ensembl"/>
</dbReference>
<dbReference type="GO" id="GO:0046641">
    <property type="term" value="P:positive regulation of alpha-beta T cell proliferation"/>
    <property type="evidence" value="ECO:0007669"/>
    <property type="project" value="Ensembl"/>
</dbReference>
<dbReference type="GO" id="GO:0050850">
    <property type="term" value="P:positive regulation of calcium-mediated signaling"/>
    <property type="evidence" value="ECO:0007669"/>
    <property type="project" value="Ensembl"/>
</dbReference>
<dbReference type="GO" id="GO:0045582">
    <property type="term" value="P:positive regulation of T cell differentiation"/>
    <property type="evidence" value="ECO:0000314"/>
    <property type="project" value="MGI"/>
</dbReference>
<dbReference type="GO" id="GO:0045059">
    <property type="term" value="P:positive thymic T cell selection"/>
    <property type="evidence" value="ECO:0000314"/>
    <property type="project" value="MGI"/>
</dbReference>
<dbReference type="GO" id="GO:0006468">
    <property type="term" value="P:protein phosphorylation"/>
    <property type="evidence" value="ECO:0000314"/>
    <property type="project" value="UniProtKB"/>
</dbReference>
<dbReference type="GO" id="GO:0042110">
    <property type="term" value="P:T cell activation"/>
    <property type="evidence" value="ECO:0000304"/>
    <property type="project" value="UniProtKB"/>
</dbReference>
<dbReference type="GO" id="GO:0070489">
    <property type="term" value="P:T cell aggregation"/>
    <property type="evidence" value="ECO:0000304"/>
    <property type="project" value="UniProtKB"/>
</dbReference>
<dbReference type="GO" id="GO:0030217">
    <property type="term" value="P:T cell differentiation"/>
    <property type="evidence" value="ECO:0000303"/>
    <property type="project" value="UniProtKB"/>
</dbReference>
<dbReference type="GO" id="GO:0072678">
    <property type="term" value="P:T cell migration"/>
    <property type="evidence" value="ECO:0000304"/>
    <property type="project" value="UniProtKB"/>
</dbReference>
<dbReference type="GO" id="GO:0050852">
    <property type="term" value="P:T cell receptor signaling pathway"/>
    <property type="evidence" value="ECO:0000314"/>
    <property type="project" value="UniProt"/>
</dbReference>
<dbReference type="CDD" id="cd05115">
    <property type="entry name" value="PTKc_Zap-70"/>
    <property type="match status" value="1"/>
</dbReference>
<dbReference type="CDD" id="cd10402">
    <property type="entry name" value="SH2_C-SH2_Zap70"/>
    <property type="match status" value="1"/>
</dbReference>
<dbReference type="CDD" id="cd09938">
    <property type="entry name" value="SH2_N-SH2_Zap70_Syk_like"/>
    <property type="match status" value="1"/>
</dbReference>
<dbReference type="DisProt" id="DP01123"/>
<dbReference type="FunFam" id="1.10.930.10:FF:000001">
    <property type="entry name" value="Tyrosine-protein kinase"/>
    <property type="match status" value="1"/>
</dbReference>
<dbReference type="FunFam" id="3.30.200.20:FF:000185">
    <property type="entry name" value="Tyrosine-protein kinase"/>
    <property type="match status" value="1"/>
</dbReference>
<dbReference type="FunFam" id="3.30.505.10:FF:000031">
    <property type="entry name" value="Tyrosine-protein kinase"/>
    <property type="match status" value="1"/>
</dbReference>
<dbReference type="FunFam" id="3.30.505.10:FF:000063">
    <property type="entry name" value="Tyrosine-protein kinase"/>
    <property type="match status" value="1"/>
</dbReference>
<dbReference type="FunFam" id="1.10.510.10:FF:000216">
    <property type="entry name" value="Tyrosine-protein kinase SYK"/>
    <property type="match status" value="1"/>
</dbReference>
<dbReference type="Gene3D" id="3.30.200.20">
    <property type="entry name" value="Phosphorylase Kinase, domain 1"/>
    <property type="match status" value="1"/>
</dbReference>
<dbReference type="Gene3D" id="3.30.505.10">
    <property type="entry name" value="SH2 domain"/>
    <property type="match status" value="2"/>
</dbReference>
<dbReference type="Gene3D" id="1.10.930.10">
    <property type="entry name" value="Syk Kinase, Chain A, domain 2"/>
    <property type="match status" value="1"/>
</dbReference>
<dbReference type="Gene3D" id="1.10.510.10">
    <property type="entry name" value="Transferase(Phosphotransferase) domain 1"/>
    <property type="match status" value="1"/>
</dbReference>
<dbReference type="IDEAL" id="IID00553"/>
<dbReference type="InterPro" id="IPR011009">
    <property type="entry name" value="Kinase-like_dom_sf"/>
</dbReference>
<dbReference type="InterPro" id="IPR023420">
    <property type="entry name" value="Kinase_SYK/ZAP-70_inter-SH2_sf"/>
</dbReference>
<dbReference type="InterPro" id="IPR050198">
    <property type="entry name" value="Non-receptor_tyrosine_kinases"/>
</dbReference>
<dbReference type="InterPro" id="IPR000719">
    <property type="entry name" value="Prot_kinase_dom"/>
</dbReference>
<dbReference type="InterPro" id="IPR017441">
    <property type="entry name" value="Protein_kinase_ATP_BS"/>
</dbReference>
<dbReference type="InterPro" id="IPR001245">
    <property type="entry name" value="Ser-Thr/Tyr_kinase_cat_dom"/>
</dbReference>
<dbReference type="InterPro" id="IPR000980">
    <property type="entry name" value="SH2"/>
</dbReference>
<dbReference type="InterPro" id="IPR036860">
    <property type="entry name" value="SH2_dom_sf"/>
</dbReference>
<dbReference type="InterPro" id="IPR035838">
    <property type="entry name" value="SYK/ZAP-70_N_SH2"/>
</dbReference>
<dbReference type="InterPro" id="IPR008266">
    <property type="entry name" value="Tyr_kinase_AS"/>
</dbReference>
<dbReference type="InterPro" id="IPR020635">
    <property type="entry name" value="Tyr_kinase_cat_dom"/>
</dbReference>
<dbReference type="InterPro" id="IPR012234">
    <property type="entry name" value="Tyr_kinase_non-rcpt_SYK/ZAP70"/>
</dbReference>
<dbReference type="PANTHER" id="PTHR24418">
    <property type="entry name" value="TYROSINE-PROTEIN KINASE"/>
    <property type="match status" value="1"/>
</dbReference>
<dbReference type="Pfam" id="PF07714">
    <property type="entry name" value="PK_Tyr_Ser-Thr"/>
    <property type="match status" value="1"/>
</dbReference>
<dbReference type="Pfam" id="PF00017">
    <property type="entry name" value="SH2"/>
    <property type="match status" value="2"/>
</dbReference>
<dbReference type="PIRSF" id="PIRSF000604">
    <property type="entry name" value="TyrPK_SYK"/>
    <property type="match status" value="1"/>
</dbReference>
<dbReference type="PRINTS" id="PR00401">
    <property type="entry name" value="SH2DOMAIN"/>
</dbReference>
<dbReference type="PRINTS" id="PR00109">
    <property type="entry name" value="TYRKINASE"/>
</dbReference>
<dbReference type="SMART" id="SM00252">
    <property type="entry name" value="SH2"/>
    <property type="match status" value="2"/>
</dbReference>
<dbReference type="SMART" id="SM00219">
    <property type="entry name" value="TyrKc"/>
    <property type="match status" value="1"/>
</dbReference>
<dbReference type="SUPFAM" id="SSF56112">
    <property type="entry name" value="Protein kinase-like (PK-like)"/>
    <property type="match status" value="1"/>
</dbReference>
<dbReference type="SUPFAM" id="SSF55550">
    <property type="entry name" value="SH2 domain"/>
    <property type="match status" value="2"/>
</dbReference>
<dbReference type="PROSITE" id="PS00107">
    <property type="entry name" value="PROTEIN_KINASE_ATP"/>
    <property type="match status" value="1"/>
</dbReference>
<dbReference type="PROSITE" id="PS50011">
    <property type="entry name" value="PROTEIN_KINASE_DOM"/>
    <property type="match status" value="1"/>
</dbReference>
<dbReference type="PROSITE" id="PS00109">
    <property type="entry name" value="PROTEIN_KINASE_TYR"/>
    <property type="match status" value="1"/>
</dbReference>
<dbReference type="PROSITE" id="PS50001">
    <property type="entry name" value="SH2"/>
    <property type="match status" value="2"/>
</dbReference>
<reference key="1">
    <citation type="journal article" date="1992" name="Cell">
        <title>ZAP-70: a 70 kd protein-tyrosine kinase that associates with the TCR zeta chain.</title>
        <authorList>
            <person name="Chan A.C."/>
            <person name="Iwashima M."/>
            <person name="Turck C.W."/>
            <person name="Weiss A."/>
        </authorList>
    </citation>
    <scope>NUCLEOTIDE SEQUENCE [MRNA] (ISOFORM 1)</scope>
    <scope>FUNCTION</scope>
    <scope>INTERACTION WITH CD247</scope>
    <scope>TISSUE SPECIFICITY</scope>
    <scope>PHOSPHORYLATION</scope>
</reference>
<reference key="2">
    <citation type="journal article" date="2004" name="Biochem. Biophys. Res. Commun.">
        <title>Identification of a novel isoform of ZAP-70, truncated ZAP kinase.</title>
        <authorList>
            <person name="Kuroyama H."/>
            <person name="Ikeda T."/>
            <person name="Kasai M."/>
            <person name="Yamasaki S."/>
            <person name="Tatsumi M."/>
            <person name="Utsuyama M."/>
            <person name="Saito T."/>
            <person name="Hirokawa K."/>
        </authorList>
    </citation>
    <scope>NUCLEOTIDE SEQUENCE [MRNA] (ISOFORM 2)</scope>
    <source>
        <tissue>Leukocyte</tissue>
    </source>
</reference>
<reference key="3">
    <citation type="journal article" date="2005" name="Nature">
        <title>Generation and annotation of the DNA sequences of human chromosomes 2 and 4.</title>
        <authorList>
            <person name="Hillier L.W."/>
            <person name="Graves T.A."/>
            <person name="Fulton R.S."/>
            <person name="Fulton L.A."/>
            <person name="Pepin K.H."/>
            <person name="Minx P."/>
            <person name="Wagner-McPherson C."/>
            <person name="Layman D."/>
            <person name="Wylie K."/>
            <person name="Sekhon M."/>
            <person name="Becker M.C."/>
            <person name="Fewell G.A."/>
            <person name="Delehaunty K.D."/>
            <person name="Miner T.L."/>
            <person name="Nash W.E."/>
            <person name="Kremitzki C."/>
            <person name="Oddy L."/>
            <person name="Du H."/>
            <person name="Sun H."/>
            <person name="Bradshaw-Cordum H."/>
            <person name="Ali J."/>
            <person name="Carter J."/>
            <person name="Cordes M."/>
            <person name="Harris A."/>
            <person name="Isak A."/>
            <person name="van Brunt A."/>
            <person name="Nguyen C."/>
            <person name="Du F."/>
            <person name="Courtney L."/>
            <person name="Kalicki J."/>
            <person name="Ozersky P."/>
            <person name="Abbott S."/>
            <person name="Armstrong J."/>
            <person name="Belter E.A."/>
            <person name="Caruso L."/>
            <person name="Cedroni M."/>
            <person name="Cotton M."/>
            <person name="Davidson T."/>
            <person name="Desai A."/>
            <person name="Elliott G."/>
            <person name="Erb T."/>
            <person name="Fronick C."/>
            <person name="Gaige T."/>
            <person name="Haakenson W."/>
            <person name="Haglund K."/>
            <person name="Holmes A."/>
            <person name="Harkins R."/>
            <person name="Kim K."/>
            <person name="Kruchowski S.S."/>
            <person name="Strong C.M."/>
            <person name="Grewal N."/>
            <person name="Goyea E."/>
            <person name="Hou S."/>
            <person name="Levy A."/>
            <person name="Martinka S."/>
            <person name="Mead K."/>
            <person name="McLellan M.D."/>
            <person name="Meyer R."/>
            <person name="Randall-Maher J."/>
            <person name="Tomlinson C."/>
            <person name="Dauphin-Kohlberg S."/>
            <person name="Kozlowicz-Reilly A."/>
            <person name="Shah N."/>
            <person name="Swearengen-Shahid S."/>
            <person name="Snider J."/>
            <person name="Strong J.T."/>
            <person name="Thompson J."/>
            <person name="Yoakum M."/>
            <person name="Leonard S."/>
            <person name="Pearman C."/>
            <person name="Trani L."/>
            <person name="Radionenko M."/>
            <person name="Waligorski J.E."/>
            <person name="Wang C."/>
            <person name="Rock S.M."/>
            <person name="Tin-Wollam A.-M."/>
            <person name="Maupin R."/>
            <person name="Latreille P."/>
            <person name="Wendl M.C."/>
            <person name="Yang S.-P."/>
            <person name="Pohl C."/>
            <person name="Wallis J.W."/>
            <person name="Spieth J."/>
            <person name="Bieri T.A."/>
            <person name="Berkowicz N."/>
            <person name="Nelson J.O."/>
            <person name="Osborne J."/>
            <person name="Ding L."/>
            <person name="Meyer R."/>
            <person name="Sabo A."/>
            <person name="Shotland Y."/>
            <person name="Sinha P."/>
            <person name="Wohldmann P.E."/>
            <person name="Cook L.L."/>
            <person name="Hickenbotham M.T."/>
            <person name="Eldred J."/>
            <person name="Williams D."/>
            <person name="Jones T.A."/>
            <person name="She X."/>
            <person name="Ciccarelli F.D."/>
            <person name="Izaurralde E."/>
            <person name="Taylor J."/>
            <person name="Schmutz J."/>
            <person name="Myers R.M."/>
            <person name="Cox D.R."/>
            <person name="Huang X."/>
            <person name="McPherson J.D."/>
            <person name="Mardis E.R."/>
            <person name="Clifton S.W."/>
            <person name="Warren W.C."/>
            <person name="Chinwalla A.T."/>
            <person name="Eddy S.R."/>
            <person name="Marra M.A."/>
            <person name="Ovcharenko I."/>
            <person name="Furey T.S."/>
            <person name="Miller W."/>
            <person name="Eichler E.E."/>
            <person name="Bork P."/>
            <person name="Suyama M."/>
            <person name="Torrents D."/>
            <person name="Waterston R.H."/>
            <person name="Wilson R.K."/>
        </authorList>
    </citation>
    <scope>NUCLEOTIDE SEQUENCE [LARGE SCALE GENOMIC DNA]</scope>
</reference>
<reference key="4">
    <citation type="journal article" date="2004" name="Genome Res.">
        <title>The status, quality, and expansion of the NIH full-length cDNA project: the Mammalian Gene Collection (MGC).</title>
        <authorList>
            <consortium name="The MGC Project Team"/>
        </authorList>
    </citation>
    <scope>NUCLEOTIDE SEQUENCE [LARGE SCALE MRNA] (ISOFORMS 1 AND 3)</scope>
    <source>
        <tissue>Blood</tissue>
        <tissue>Brain</tissue>
    </source>
</reference>
<reference key="5">
    <citation type="journal article" date="1994" name="Cell">
        <title>Defective T cell receptor signaling and CD8+ thymic selection in humans lacking zap-70 kinase.</title>
        <authorList>
            <person name="Arpaia E."/>
            <person name="Shahar M."/>
            <person name="Dadi H."/>
            <person name="Cohen A."/>
            <person name="Roifman C.M."/>
        </authorList>
    </citation>
    <scope>NUCLEOTIDE SEQUENCE [MRNA] OF 521-547</scope>
    <scope>VARIANT IMD48 LEU-GLU-GLN-541 INS</scope>
    <scope>FUNCTION</scope>
    <scope>INVOLVEMENT IN IMD48</scope>
    <source>
        <tissue>Lymphoid tissue</tissue>
    </source>
</reference>
<reference key="6">
    <citation type="journal article" date="1995" name="J. Exp. Med.">
        <title>ZAP-70 binding specificity to T cell receptor tyrosine-based activation motifs: the tandem SH2 domains of ZAP-70 bind distinct tyrosine-based activation motifs with varying affinity.</title>
        <authorList>
            <person name="Isakov N."/>
            <person name="Wange R.L."/>
            <person name="Burgess W.H."/>
            <person name="Watts J.D."/>
            <person name="Aebersold R."/>
            <person name="Samelson L.E."/>
        </authorList>
    </citation>
    <scope>CHARACTERIZATION OF TAM-BINDING</scope>
</reference>
<reference key="7">
    <citation type="journal article" date="1995" name="EMBO J.">
        <title>Activation of ZAP-70 kinase activity by phosphorylation of tyrosine 493 is required for lymphocyte antigen receptor function.</title>
        <authorList>
            <person name="Chan A.C."/>
            <person name="Dalton M."/>
            <person name="Johnson R."/>
            <person name="Kong G.H."/>
            <person name="Wang T."/>
            <person name="Thoma R."/>
            <person name="Kurosaki T."/>
        </authorList>
    </citation>
    <scope>PHOSPHORYLATION AT TYR-492 AND TYR-493</scope>
    <scope>MUTAGENESIS OF TYR-492 AND TYR-493</scope>
</reference>
<reference key="8">
    <citation type="journal article" date="1996" name="J. Biol. Chem.">
        <title>Phosphorylation of SLP-76 by the ZAP-70 protein-tyrosine kinase is required for T-cell receptor function.</title>
        <authorList>
            <person name="Bubeck Wardenburg J."/>
            <person name="Fu C."/>
            <person name="Jackman J.K."/>
            <person name="Flotow H."/>
            <person name="Wilkinson S.E."/>
            <person name="Williams D.H."/>
            <person name="Johnson R."/>
            <person name="Kong G."/>
            <person name="Chan A.C."/>
            <person name="Findell P.R."/>
        </authorList>
    </citation>
    <scope>FUNCTION IN PHOSPHORYLATION OF LCP2</scope>
</reference>
<reference key="9">
    <citation type="journal article" date="1996" name="Mol. Cell. Biol.">
        <title>Enhancement of lymphocyte responsiveness by a gain-of-function mutation of ZAP-70.</title>
        <authorList>
            <person name="Zhao Q."/>
            <person name="Weiss A."/>
        </authorList>
    </citation>
    <scope>PHOSPHORYLATION AT TYR-292</scope>
    <scope>MUTAGENESIS OF TYR-292</scope>
</reference>
<reference key="10">
    <citation type="journal article" date="1997" name="J. Exp. Med.">
        <title>The Vav binding site (Y315) in ZAP-70 is critical for antigen receptor-mediated signal transduction.</title>
        <authorList>
            <person name="Wu J."/>
            <person name="Zhao Q."/>
            <person name="Kurosaki T."/>
            <person name="Weiss A."/>
        </authorList>
    </citation>
    <scope>INTERACTION WITH VAV1</scope>
    <scope>MUTAGENESIS OF TYR-315</scope>
</reference>
<reference key="11">
    <citation type="journal article" date="1997" name="J. Immunol.">
        <title>In vivo association of CD5 with tyrosine-phosphorylated ZAP-70 and p21 phospho-zeta molecules in human CD3+ thymocytes.</title>
        <authorList>
            <person name="Gary-Gouy H."/>
            <person name="Lang V."/>
            <person name="Sarun S."/>
            <person name="Boumsell L."/>
            <person name="Bismuth G."/>
        </authorList>
    </citation>
    <scope>TISSUE SPECIFICITY</scope>
</reference>
<reference key="12">
    <citation type="journal article" date="1998" name="Cell">
        <title>LAT: the ZAP-70 tyrosine kinase substrate that links T cell receptor to cellular activation.</title>
        <authorList>
            <person name="Zhang W."/>
            <person name="Sloan-Lancaster J."/>
            <person name="Kitchen J."/>
            <person name="Trible R.P."/>
            <person name="Samelson L.E."/>
        </authorList>
    </citation>
    <scope>FUNCTION IN PHOSPHORYLATION OF LAT</scope>
</reference>
<reference key="13">
    <citation type="journal article" date="1998" name="J. Cell Biol.">
        <title>ZAP-70 association with T cell receptor zeta (TCRzeta): fluorescence imaging of dynamic changes upon cellular stimulation.</title>
        <authorList>
            <person name="Sloan-Lancaster J."/>
            <person name="Presley J."/>
            <person name="Ellenberg J."/>
            <person name="Yamazaki T."/>
            <person name="Lippincott-Schwartz J."/>
            <person name="Samelson L.E."/>
        </authorList>
    </citation>
    <scope>SUBCELLULAR LOCATION</scope>
</reference>
<reference key="14">
    <citation type="journal article" date="1999" name="J. Biol. Chem.">
        <title>Tyrosine 319, a newly identified phosphorylation site of ZAP-70, plays a critical role in T cell antigen receptor signaling.</title>
        <authorList>
            <person name="Di Bartolo V."/>
            <person name="Mege D."/>
            <person name="Germain V."/>
            <person name="Pelosi M."/>
            <person name="Dufour E."/>
            <person name="Michel F."/>
            <person name="Magistrelli G."/>
            <person name="Isacchi A."/>
            <person name="Acuto O."/>
        </authorList>
    </citation>
    <scope>PHOSPHORYLATION AT TYR-315 AND TYR-319</scope>
    <scope>MUTAGENESIS OF TYR-315 AND TYR-319</scope>
</reference>
<reference key="15">
    <citation type="journal article" date="1999" name="Proc. Natl. Acad. Sci. U.S.A.">
        <title>SLAP, a dimeric adapter protein, plays a functional role in T cell receptor signaling.</title>
        <authorList>
            <person name="Tang J."/>
            <person name="Sawasdikosol S."/>
            <person name="Chang J.-H."/>
            <person name="Burakoff S.J."/>
        </authorList>
    </citation>
    <scope>INTERACTION WITH CBL AND SLA</scope>
</reference>
<reference key="16">
    <citation type="journal article" date="2001" name="J. Biol. Chem.">
        <title>Cbl promotes ubiquitination of the T cell receptor zeta through an adaptor function of Zap-70.</title>
        <authorList>
            <person name="Wang H.Y."/>
            <person name="Altman Y."/>
            <person name="Fang D."/>
            <person name="Elly C."/>
            <person name="Dai Y."/>
            <person name="Shao Y."/>
            <person name="Liu Y.C."/>
        </authorList>
    </citation>
    <scope>FUNCTION IN CD3Z UBIQUITINATION</scope>
</reference>
<reference key="17">
    <citation type="journal article" date="2002" name="Biochem. Biophys. Res. Commun.">
        <title>SPAP2, an Ig family receptor containing both ITIMs and ITAMs.</title>
        <authorList>
            <person name="Xu M.-J."/>
            <person name="Zhao R."/>
            <person name="Cao H."/>
            <person name="Zhao Z.J."/>
        </authorList>
    </citation>
    <scope>INTERACTION WITH FCRL3</scope>
</reference>
<reference key="18">
    <citation type="journal article" date="2002" name="Eur. J. Immunol.">
        <title>Tyrosine 315 determines optimal recruitment of ZAP-70 to the T cell antigen receptor.</title>
        <authorList>
            <person name="Di Bartolo V."/>
            <person name="Malissen M."/>
            <person name="Dufour E."/>
            <person name="Sechet E."/>
            <person name="Malissen B."/>
            <person name="Acuto O."/>
        </authorList>
    </citation>
    <scope>MUTAGENESIS OF TYR-315</scope>
</reference>
<reference key="19">
    <citation type="journal article" date="2002" name="Eur. J. Biochem.">
        <title>Shb links SLP-76 and Vav with the CD3 complex in Jurkat T cells.</title>
        <authorList>
            <person name="Lindholm C.K."/>
            <person name="Henriksson M.L."/>
            <person name="Hallberg B."/>
            <person name="Welsh M."/>
        </authorList>
    </citation>
    <scope>INTERACTION WITH SHB</scope>
</reference>
<reference key="20">
    <citation type="journal article" date="2003" name="Proc. Natl. Acad. Sci. U.S.A.">
        <title>Profiling of tyrosine phosphorylation pathways in human cells using mass spectrometry.</title>
        <authorList>
            <person name="Salomon A.R."/>
            <person name="Ficarro S.B."/>
            <person name="Brill L.M."/>
            <person name="Brinker A."/>
            <person name="Phung Q.T."/>
            <person name="Ericson C."/>
            <person name="Sauer K."/>
            <person name="Brock A."/>
            <person name="Horn D.M."/>
            <person name="Schultz P.G."/>
            <person name="Peters E.C."/>
        </authorList>
    </citation>
    <scope>IDENTIFICATION BY MASS SPECTROMETRY [LARGE SCALE ANALYSIS]</scope>
</reference>
<reference key="21">
    <citation type="journal article" date="2004" name="Anal. Chem.">
        <title>Robust phosphoproteomic profiling of tyrosine phosphorylation sites from human T cells using immobilized metal affinity chromatography and tandem mass spectrometry.</title>
        <authorList>
            <person name="Brill L.M."/>
            <person name="Salomon A.R."/>
            <person name="Ficarro S.B."/>
            <person name="Mukherji M."/>
            <person name="Stettler-Gill M."/>
            <person name="Peters E.C."/>
        </authorList>
    </citation>
    <scope>PHOSPHORYLATION [LARGE SCALE ANALYSIS] AT SER-289</scope>
    <scope>IDENTIFICATION BY MASS SPECTROMETRY [LARGE SCALE ANALYSIS]</scope>
    <source>
        <tissue>Leukemic T-cell</tissue>
    </source>
</reference>
<reference key="22">
    <citation type="journal article" date="2004" name="Proc. Natl. Acad. Sci. U.S.A.">
        <title>NFAM1, an immunoreceptor tyrosine-based activation motif-bearing molecule that regulates B cell development and signaling.</title>
        <authorList>
            <person name="Ohtsuka M."/>
            <person name="Arase H."/>
            <person name="Takeuchi A."/>
            <person name="Yamasaki S."/>
            <person name="Shiina R."/>
            <person name="Suenaga T."/>
            <person name="Sakurai D."/>
            <person name="Yokosuka T."/>
            <person name="Arase N."/>
            <person name="Iwashima M."/>
            <person name="Kitamura T."/>
            <person name="Moriya H."/>
            <person name="Saito T."/>
        </authorList>
    </citation>
    <scope>INTERACTION WITH NFAM1</scope>
</reference>
<reference key="23">
    <citation type="journal article" date="2005" name="J. Immunol.">
        <title>T cell activation-induced CrkII binding to the Zap70 protein tyrosine kinase is mediated by Lck-dependent phosphorylation of Zap70 tyrosine 315.</title>
        <authorList>
            <person name="Gelkop S."/>
            <person name="Gish G.D."/>
            <person name="Babichev Y."/>
            <person name="Pawson T."/>
            <person name="Isakov N."/>
        </authorList>
    </citation>
    <scope>PHOSPHORYLATION BY LCK</scope>
</reference>
<reference key="24">
    <citation type="journal article" date="2005" name="Nat. Biotechnol.">
        <title>Immunoaffinity profiling of tyrosine phosphorylation in cancer cells.</title>
        <authorList>
            <person name="Rush J."/>
            <person name="Moritz A."/>
            <person name="Lee K.A."/>
            <person name="Guo A."/>
            <person name="Goss V.L."/>
            <person name="Spek E.J."/>
            <person name="Zhang H."/>
            <person name="Zha X.-M."/>
            <person name="Polakiewicz R.D."/>
            <person name="Comb M.J."/>
        </authorList>
    </citation>
    <scope>PHOSPHORYLATION [LARGE SCALE ANALYSIS] AT TYR-248</scope>
    <scope>IDENTIFICATION BY MASS SPECTROMETRY [LARGE SCALE ANALYSIS]</scope>
</reference>
<reference key="25">
    <citation type="journal article" date="2006" name="Clin. Cancer Res.">
        <title>ZAP-70 expression in normal pro/pre B cells, mature B cells, and in B-cell acute lymphoblastic leukemia.</title>
        <authorList>
            <person name="Crespo M."/>
            <person name="Villamor N."/>
            <person name="Gine E."/>
            <person name="Muntanola A."/>
            <person name="Colomer D."/>
            <person name="Marafioti T."/>
            <person name="Jones M."/>
            <person name="Camos M."/>
            <person name="Campo E."/>
            <person name="Montserrat E."/>
            <person name="Bosch F."/>
        </authorList>
    </citation>
    <scope>TISSUE SPECIFICITY</scope>
</reference>
<reference key="26">
    <citation type="journal article" date="2006" name="J. Biol. Chem.">
        <title>Identification of substrates of human protein-tyrosine phosphatase PTPN22.</title>
        <authorList>
            <person name="Wu J."/>
            <person name="Katrekar A."/>
            <person name="Honigberg L.A."/>
            <person name="Smith A.M."/>
            <person name="Conn M.T."/>
            <person name="Tang J."/>
            <person name="Jeffery D."/>
            <person name="Mortara K."/>
            <person name="Sampang J."/>
            <person name="Williams S.R."/>
            <person name="Buggy J."/>
            <person name="Clark J.M."/>
        </authorList>
    </citation>
    <scope>DEPHOSPHORYLATION BY PTN22</scope>
</reference>
<reference key="27">
    <citation type="journal article" date="2009" name="Immunol. Rev.">
        <title>The structure, regulation, and function of ZAP-70.</title>
        <authorList>
            <person name="Au-Yeung B.B."/>
            <person name="Deindl S."/>
            <person name="Hsu L.Y."/>
            <person name="Palacios E.H."/>
            <person name="Levin S.E."/>
            <person name="Kuriyan J."/>
            <person name="Weiss A."/>
        </authorList>
    </citation>
    <scope>REVIEW ON FUNCTION</scope>
</reference>
<reference key="28">
    <citation type="journal article" date="2009" name="J. Immunol.">
        <title>FCRL3, an autoimmune susceptibility gene, has inhibitory potential on B-cell receptor-mediated signaling.</title>
        <authorList>
            <person name="Kochi Y."/>
            <person name="Myouzen K."/>
            <person name="Yamada R."/>
            <person name="Suzuki A."/>
            <person name="Kurosaki T."/>
            <person name="Nakamura Y."/>
            <person name="Yamamoto K."/>
        </authorList>
    </citation>
    <scope>INTERACTION WITH FCRL3</scope>
</reference>
<reference key="29">
    <citation type="journal article" date="2009" name="Sci. Signal.">
        <title>Quantitative phosphoproteomic analysis of T cell receptor signaling reveals system-wide modulation of protein-protein interactions.</title>
        <authorList>
            <person name="Mayya V."/>
            <person name="Lundgren D.H."/>
            <person name="Hwang S.-I."/>
            <person name="Rezaul K."/>
            <person name="Wu L."/>
            <person name="Eng J.K."/>
            <person name="Rodionov V."/>
            <person name="Han D.K."/>
        </authorList>
    </citation>
    <scope>PHOSPHORYLATION [LARGE SCALE ANALYSIS] AT TYR-292</scope>
    <scope>IDENTIFICATION BY MASS SPECTROMETRY [LARGE SCALE ANALYSIS]</scope>
    <source>
        <tissue>Leukemic T-cell</tissue>
    </source>
</reference>
<reference key="30">
    <citation type="journal article" date="2009" name="Science">
        <title>Lysine acetylation targets protein complexes and co-regulates major cellular functions.</title>
        <authorList>
            <person name="Choudhary C."/>
            <person name="Kumar C."/>
            <person name="Gnad F."/>
            <person name="Nielsen M.L."/>
            <person name="Rehman M."/>
            <person name="Walther T.C."/>
            <person name="Olsen J.V."/>
            <person name="Mann M."/>
        </authorList>
    </citation>
    <scope>ACETYLATION [LARGE SCALE ANALYSIS] AT LYS-603</scope>
    <scope>IDENTIFICATION BY MASS SPECTROMETRY [LARGE SCALE ANALYSIS]</scope>
</reference>
<reference key="31">
    <citation type="journal article" date="2010" name="Semin. Immunopathol.">
        <title>ZAP70: a master regulator of adaptive immunity.</title>
        <authorList>
            <person name="Fischer A."/>
            <person name="Picard C."/>
            <person name="Chemin K."/>
            <person name="Dogniaux S."/>
            <person name="le Deist F."/>
            <person name="Hivroz C."/>
        </authorList>
    </citation>
    <scope>FUNCTION</scope>
    <scope>DOMAIN</scope>
</reference>
<reference key="32">
    <citation type="journal article" date="2016" name="J. Exp. Med.">
        <title>Otud7b facilitates T cell activation and inflammatory responses by regulating Zap70 ubiquitination.</title>
        <authorList>
            <person name="Hu H."/>
            <person name="Wang H."/>
            <person name="Xiao Y."/>
            <person name="Jin J."/>
            <person name="Chang J.H."/>
            <person name="Zou Q."/>
            <person name="Xie X."/>
            <person name="Cheng X."/>
            <person name="Sun S.C."/>
        </authorList>
    </citation>
    <scope>FUNCTION</scope>
    <scope>INTERACTION WITH OTUD7B AND UBASH3B</scope>
    <scope>UBIQUITINATION AT LYS-544</scope>
    <scope>IDENTIFICATION BY MASS SPECTROMETRY</scope>
    <scope>MUTAGENESIS OF LYS-304; LYS-538 AND LYS-544</scope>
</reference>
<reference key="33">
    <citation type="journal article" date="2024" name="Cell">
        <title>ITPRIPL1 binds CD3epsilon to impede T cell activation and enable tumor immune evasion.</title>
        <authorList>
            <person name="Deng S."/>
            <person name="Zhang Y."/>
            <person name="Wang H."/>
            <person name="Liang W."/>
            <person name="Xie L."/>
            <person name="Li N."/>
            <person name="Fang Y."/>
            <person name="Wang Y."/>
            <person name="Liu J."/>
            <person name="Chi H."/>
            <person name="Sun Y."/>
            <person name="Ye R."/>
            <person name="Shan L."/>
            <person name="Shi J."/>
            <person name="Shen Z."/>
            <person name="Wang Y."/>
            <person name="Wang S."/>
            <person name="Brosseau J.P."/>
            <person name="Wang F."/>
            <person name="Liu G."/>
            <person name="Quan Y."/>
            <person name="Xu J."/>
        </authorList>
    </citation>
    <scope>FUNCTION</scope>
</reference>
<reference key="34">
    <citation type="journal article" date="1995" name="Nature">
        <title>Molecular basis for interaction of the protein tyrosine kinase ZAP-70 with the T-cell receptor.</title>
        <authorList>
            <person name="Hatada M.H."/>
            <person name="Lu X."/>
            <person name="Laird E.R."/>
            <person name="Green J."/>
            <person name="Morgenstern J.P."/>
            <person name="Lou M."/>
            <person name="Marr C.S."/>
            <person name="Phillips T.B."/>
            <person name="Ram M.K."/>
            <person name="Theriault K."/>
            <person name="Zoller M.J."/>
            <person name="Karas L.K."/>
        </authorList>
    </citation>
    <scope>X-RAY CRYSTALLOGRAPHY (1.9 ANGSTROMS) OF 3-256 IN COMPLEX WITH CD247</scope>
    <scope>INTERACTION WITH CD247</scope>
</reference>
<reference key="35">
    <citation type="journal article" date="1999" name="Nature">
        <title>Structure of the amino-terminal domain of Cbl complexed to its binding site on ZAP-70 kinase.</title>
        <authorList>
            <person name="Meng W."/>
            <person name="Sawasdikosol S."/>
            <person name="Burakoff S.J."/>
            <person name="Eck M.J."/>
        </authorList>
    </citation>
    <scope>X-RAY CRYSTALLOGRAPHY (2.1 ANGSTROMS) OF 286-297 IN COMPLEX WITH CBL</scope>
    <scope>INTERACTION WITH CBL</scope>
</reference>
<reference key="36">
    <citation type="journal article" date="2000" name="Cell">
        <title>Structure of a c-Cbl-UbcH7 complex: RING domain function in ubiquitin-protein ligases.</title>
        <authorList>
            <person name="Zheng N."/>
            <person name="Wang P."/>
            <person name="Jeffrey P.D."/>
            <person name="Pavletich N.P."/>
        </authorList>
    </citation>
    <scope>X-RAY CRYSTALLOGRAPHY (2.9 ANGSTROMS) OF 289-297 IN COMPLEX WITH CBL AND UBE2L3</scope>
</reference>
<reference key="37">
    <citation type="journal article" date="2002" name="Biochemistry">
        <title>Crystal structure and NMR studies of the apo SH2 domains of ZAP-70: two bikes rather than a tandem.</title>
        <authorList>
            <person name="Folmer R.H."/>
            <person name="Geschwindner S."/>
            <person name="Xue Y."/>
        </authorList>
    </citation>
    <scope>X-RAY CRYSTALLOGRAPHY (2.5 ANGSTROMS) OF 1-256</scope>
</reference>
<reference key="38">
    <citation type="journal article" date="2004" name="J. Biol. Chem.">
        <title>The three-dimensional structure of the ZAP-70 kinase domain in complex with staurosporine: implications for the design of selective inhibitors.</title>
        <authorList>
            <person name="Jin L."/>
            <person name="Pluskey S."/>
            <person name="Petrella E.C."/>
            <person name="Cantin S.M."/>
            <person name="Gorga J.C."/>
            <person name="Rynkiewicz M.J."/>
            <person name="Pandey P."/>
            <person name="Strickler J.E."/>
            <person name="Babine R.E."/>
            <person name="Weaver D.T."/>
            <person name="Seidl K.J."/>
        </authorList>
    </citation>
    <scope>X-RAY CRYSTALLOGRAPHY (2.3 ANGSTROMS) OF 327-606 IN COMPLEX WITH STAUROSPORINE</scope>
    <scope>CATALYTIC ACTIVITY</scope>
    <scope>ACTIVE SITE</scope>
    <scope>MUTAGENESIS OF ASP-479</scope>
    <scope>ACTIVITY REGULATION</scope>
</reference>
<reference key="39">
    <citation type="journal article" date="2007" name="Cell">
        <title>Structural basis for the inhibition of tyrosine kinase activity of ZAP-70.</title>
        <authorList>
            <person name="Deindl S."/>
            <person name="Kadlecek T.A."/>
            <person name="Brdicka T."/>
            <person name="Cao X."/>
            <person name="Weiss A."/>
            <person name="Kuriyan J."/>
        </authorList>
    </citation>
    <scope>X-RAY CRYSTALLOGRAPHY (2.6 ANGSTROMS) OF 1-606 OF MUTANT ASN-461 IN COMPLEX WITH MAGNESIUM AND ATP ANALOG</scope>
    <scope>ACTIVE SITE</scope>
    <scope>MUTAGENESIS OF TRP-131; LEU-133; ALA-141; SER-144; GLN-145; PRO-147; TYR-315; TYR-319; ASP-461; TYR-597 AND TYR-598</scope>
</reference>
<reference key="40">
    <citation type="journal article" date="1994" name="Science">
        <title>ZAP-70 deficiency in an autosomal recessive form of severe combined immunodeficiency.</title>
        <authorList>
            <person name="Chan A.C."/>
            <person name="Kadlecek T.A."/>
            <person name="Elder M.E."/>
            <person name="Filipovich A.H."/>
            <person name="Kuo W.-L."/>
            <person name="Iwashima M."/>
            <person name="Parslow T.G."/>
            <person name="Weiss A."/>
        </authorList>
    </citation>
    <scope>VARIANT IMD48 ARG-518</scope>
</reference>
<reference key="41">
    <citation type="journal article" date="2001" name="Immunology">
        <title>Specific immunoglobulin E responses in ZAP-70-deficient patients are mediated by Syk-dependent T-cell receptor signalling.</title>
        <authorList>
            <person name="Toyabe S."/>
            <person name="Watanabe A."/>
            <person name="Harada W."/>
            <person name="Karasawa T."/>
            <person name="Uchiyama M."/>
        </authorList>
    </citation>
    <scope>VARIANT IMD48 HIS-465</scope>
</reference>
<reference key="42">
    <citation type="journal article" date="2001" name="J. Immunol.">
        <title>Distinct T cell developmental consequences in humans and mice expressing identical mutations in the DLAARN motif of ZAP-70.</title>
        <authorList>
            <person name="Elder M.E."/>
            <person name="Skoda-Smith S."/>
            <person name="Kadlecek T.A."/>
            <person name="Wang F."/>
            <person name="Wu J."/>
            <person name="Weiss A."/>
        </authorList>
    </citation>
    <scope>VARIANT IMD48 CYS-465</scope>
</reference>
<reference key="43">
    <citation type="journal article" date="2007" name="Nature">
        <title>Patterns of somatic mutation in human cancer genomes.</title>
        <authorList>
            <person name="Greenman C."/>
            <person name="Stephens P."/>
            <person name="Smith R."/>
            <person name="Dalgliesh G.L."/>
            <person name="Hunter C."/>
            <person name="Bignell G."/>
            <person name="Davies H."/>
            <person name="Teague J."/>
            <person name="Butler A."/>
            <person name="Stevens C."/>
            <person name="Edkins S."/>
            <person name="O'Meara S."/>
            <person name="Vastrik I."/>
            <person name="Schmidt E.E."/>
            <person name="Avis T."/>
            <person name="Barthorpe S."/>
            <person name="Bhamra G."/>
            <person name="Buck G."/>
            <person name="Choudhury B."/>
            <person name="Clements J."/>
            <person name="Cole J."/>
            <person name="Dicks E."/>
            <person name="Forbes S."/>
            <person name="Gray K."/>
            <person name="Halliday K."/>
            <person name="Harrison R."/>
            <person name="Hills K."/>
            <person name="Hinton J."/>
            <person name="Jenkinson A."/>
            <person name="Jones D."/>
            <person name="Menzies A."/>
            <person name="Mironenko T."/>
            <person name="Perry J."/>
            <person name="Raine K."/>
            <person name="Richardson D."/>
            <person name="Shepherd R."/>
            <person name="Small A."/>
            <person name="Tofts C."/>
            <person name="Varian J."/>
            <person name="Webb T."/>
            <person name="West S."/>
            <person name="Widaa S."/>
            <person name="Yates A."/>
            <person name="Cahill D.P."/>
            <person name="Louis D.N."/>
            <person name="Goldstraw P."/>
            <person name="Nicholson A.G."/>
            <person name="Brasseur F."/>
            <person name="Looijenga L."/>
            <person name="Weber B.L."/>
            <person name="Chiew Y.-E."/>
            <person name="DeFazio A."/>
            <person name="Greaves M.F."/>
            <person name="Green A.R."/>
            <person name="Campbell P."/>
            <person name="Birney E."/>
            <person name="Easton D.F."/>
            <person name="Chenevix-Trench G."/>
            <person name="Tan M.-H."/>
            <person name="Khoo S.K."/>
            <person name="Teh B.T."/>
            <person name="Yuen S.T."/>
            <person name="Leung S.Y."/>
            <person name="Wooster R."/>
            <person name="Futreal P.A."/>
            <person name="Stratton M.R."/>
        </authorList>
    </citation>
    <scope>VARIANTS [LARGE SCALE ANALYSIS] LEU-175; LEU-191; GLU-448 AND LEU-523</scope>
</reference>
<reference key="44">
    <citation type="journal article" date="2009" name="Eur. J. Pediatr.">
        <title>Clinical heterogeneity can hamper the diagnosis of patients with ZAP70 deficiency.</title>
        <authorList>
            <person name="Turul T."/>
            <person name="Tezcan I."/>
            <person name="Artac H."/>
            <person name="de Bruin-Versteeg S."/>
            <person name="Barendregt B.H."/>
            <person name="Reisli I."/>
            <person name="Sanal O."/>
            <person name="van Dongen J.J."/>
            <person name="van der Burg M."/>
        </authorList>
    </citation>
    <scope>VARIANTS IMD48 ARG-337; VAL-507 AND ARG-564</scope>
</reference>
<reference key="45">
    <citation type="journal article" date="2016" name="J. Exp. Med.">
        <title>A novel human autoimmune syndrome caused by combined hypomorphic and activating mutations in ZAP-70.</title>
        <authorList>
            <person name="Chan A.Y."/>
            <person name="Punwani D."/>
            <person name="Kadlecek T.A."/>
            <person name="Cowan M.J."/>
            <person name="Olson J.L."/>
            <person name="Mathes E.F."/>
            <person name="Sunderam U."/>
            <person name="Fu S.M."/>
            <person name="Srinivasan R."/>
            <person name="Kuriyan J."/>
            <person name="Brenner S.E."/>
            <person name="Weiss A."/>
            <person name="Puck J.M."/>
        </authorList>
    </citation>
    <scope>VARIANTS ADMIO2 TRP-192 AND PRO-360</scope>
    <scope>CHARACTERIZATION OF VARIANTS ADMIO2 TRP-192 AND PRO-360</scope>
    <scope>INVOLVEMENT IN ADMIO2</scope>
    <scope>INTERACTION WITH CD247</scope>
    <scope>MUTAGENESIS OF ARG-37; ARG-190; 315-TYR--TYR-319; ASP-327 AND LYS-362</scope>
</reference>
<name>ZAP70_HUMAN</name>
<organism>
    <name type="scientific">Homo sapiens</name>
    <name type="common">Human</name>
    <dbReference type="NCBI Taxonomy" id="9606"/>
    <lineage>
        <taxon>Eukaryota</taxon>
        <taxon>Metazoa</taxon>
        <taxon>Chordata</taxon>
        <taxon>Craniata</taxon>
        <taxon>Vertebrata</taxon>
        <taxon>Euteleostomi</taxon>
        <taxon>Mammalia</taxon>
        <taxon>Eutheria</taxon>
        <taxon>Euarchontoglires</taxon>
        <taxon>Primates</taxon>
        <taxon>Haplorrhini</taxon>
        <taxon>Catarrhini</taxon>
        <taxon>Hominidae</taxon>
        <taxon>Homo</taxon>
    </lineage>
</organism>
<accession>P43403</accession>
<accession>A6NFP4</accession>
<accession>Q6PIA4</accession>
<accession>Q8IXD6</accession>
<accession>Q9UBS6</accession>
<feature type="chain" id="PRO_0000088168" description="Tyrosine-protein kinase ZAP-70">
    <location>
        <begin position="1"/>
        <end position="619"/>
    </location>
</feature>
<feature type="domain" description="SH2 1" evidence="4">
    <location>
        <begin position="10"/>
        <end position="102"/>
    </location>
</feature>
<feature type="domain" description="SH2 2" evidence="4">
    <location>
        <begin position="163"/>
        <end position="254"/>
    </location>
</feature>
<feature type="domain" description="Protein kinase" evidence="3">
    <location>
        <begin position="338"/>
        <end position="600"/>
    </location>
</feature>
<feature type="region of interest" description="Interdomain A">
    <location>
        <begin position="103"/>
        <end position="162"/>
    </location>
</feature>
<feature type="region of interest" description="Interdomain B">
    <location>
        <begin position="255"/>
        <end position="337"/>
    </location>
</feature>
<feature type="region of interest" description="Disordered" evidence="6">
    <location>
        <begin position="260"/>
        <end position="309"/>
    </location>
</feature>
<feature type="active site" description="Proton acceptor" evidence="3 5 19 23">
    <location>
        <position position="461"/>
    </location>
</feature>
<feature type="binding site">
    <location>
        <begin position="345"/>
        <end position="352"/>
    </location>
    <ligand>
        <name>ATP</name>
        <dbReference type="ChEBI" id="CHEBI:30616"/>
    </ligand>
</feature>
<feature type="binding site">
    <location>
        <position position="369"/>
    </location>
    <ligand>
        <name>ATP</name>
        <dbReference type="ChEBI" id="CHEBI:30616"/>
    </ligand>
</feature>
<feature type="modified residue" description="Phosphotyrosine" evidence="43">
    <location>
        <position position="248"/>
    </location>
</feature>
<feature type="modified residue" description="Phosphoserine" evidence="42">
    <location>
        <position position="289"/>
    </location>
</feature>
<feature type="modified residue" description="Phosphotyrosine" evidence="35 45">
    <location>
        <position position="292"/>
    </location>
</feature>
<feature type="modified residue" description="Phosphotyrosine; by LCK" evidence="7">
    <location>
        <position position="315"/>
    </location>
</feature>
<feature type="modified residue" description="Phosphotyrosine" evidence="7">
    <location>
        <position position="319"/>
    </location>
</feature>
<feature type="modified residue" description="Phosphotyrosine" evidence="31">
    <location>
        <position position="492"/>
    </location>
</feature>
<feature type="modified residue" description="Phosphotyrosine" evidence="31">
    <location>
        <position position="493"/>
    </location>
</feature>
<feature type="modified residue" description="N6-acetyllysine" evidence="44">
    <location>
        <position position="603"/>
    </location>
</feature>
<feature type="cross-link" description="Glycyl lysine isopeptide (Lys-Gly) (interchain with G-Cter in ubiquitin)" evidence="28">
    <location>
        <position position="544"/>
    </location>
</feature>
<feature type="splice variant" id="VSP_031156" description="In isoform 2." evidence="40">
    <location>
        <begin position="1"/>
        <end position="307"/>
    </location>
</feature>
<feature type="splice variant" id="VSP_031157" description="In isoform 3." evidence="41">
    <location>
        <begin position="1"/>
        <end position="126"/>
    </location>
</feature>
<feature type="splice variant" id="VSP_031158" description="In isoform 3." evidence="41">
    <original>VRQTWKLE</original>
    <variation>MRLGPRWK</variation>
    <location>
        <begin position="127"/>
        <end position="134"/>
    </location>
</feature>
<feature type="sequence variant" id="VAR_041846" description="In dbSNP:rs55964305." evidence="22">
    <original>R</original>
    <variation>L</variation>
    <location>
        <position position="175"/>
    </location>
</feature>
<feature type="sequence variant" id="VAR_041847" description="In dbSNP:rs56403250." evidence="22">
    <original>P</original>
    <variation>L</variation>
    <location>
        <position position="191"/>
    </location>
</feature>
<feature type="sequence variant" id="VAR_077137" description="In ADMIO2; decreases interaction with phosphorylated CD247; decreases ZAP70 phosphorylation; no effect on subcellular localization of CD69 at the cell surface; dbSNP:rs199840952." evidence="27">
    <original>R</original>
    <variation>W</variation>
    <location>
        <position position="192"/>
    </location>
</feature>
<feature type="sequence variant" id="VAR_065623" description="In IMD48; dbSNP:rs1254428002." evidence="24">
    <original>L</original>
    <variation>R</variation>
    <location>
        <position position="337"/>
    </location>
</feature>
<feature type="sequence variant" id="VAR_077138" description="In ADMIO2; no effect on interaction with phosphorylated CD247; increases TCR-induced Y-319 and Y-493 phosphorylation of ZAP70 and phosphorylation of LAT and LCP2; increases subcellular localization of CD69 at the cell surface; weakly decreases autoinhibition conformation; dbSNP:rs869025224." evidence="27">
    <original>R</original>
    <variation>P</variation>
    <location>
        <position position="360"/>
    </location>
</feature>
<feature type="sequence variant" id="VAR_041848" description="In a head and neck squamous cell carcinoma sample; somatic mutation." evidence="22">
    <original>G</original>
    <variation>E</variation>
    <location>
        <position position="448"/>
    </location>
</feature>
<feature type="sequence variant" id="VAR_065624" description="In IMD48; dbSNP:rs113994174." evidence="11">
    <original>R</original>
    <variation>C</variation>
    <location>
        <position position="465"/>
    </location>
</feature>
<feature type="sequence variant" id="VAR_015538" description="In IMD48; dbSNP:rs137853201." evidence="13">
    <original>R</original>
    <variation>H</variation>
    <location>
        <position position="465"/>
    </location>
</feature>
<feature type="sequence variant" id="VAR_065625" description="In IMD48." evidence="24">
    <original>A</original>
    <variation>V</variation>
    <location>
        <position position="507"/>
    </location>
</feature>
<feature type="sequence variant" id="VAR_006351" description="In IMD48; dbSNP:rs104893674." evidence="33">
    <original>S</original>
    <variation>R</variation>
    <location>
        <position position="518"/>
    </location>
</feature>
<feature type="sequence variant" id="VAR_041849" description="In dbSNP:rs56189815." evidence="22">
    <original>W</original>
    <variation>L</variation>
    <location>
        <position position="523"/>
    </location>
</feature>
<feature type="sequence variant" id="VAR_038688" description="In IMD48." evidence="32">
    <original>K</original>
    <variation>KLEQ</variation>
    <location>
        <position position="541"/>
    </location>
</feature>
<feature type="sequence variant" id="VAR_065626" description="In IMD48." evidence="24">
    <original>C</original>
    <variation>R</variation>
    <location>
        <position position="564"/>
    </location>
</feature>
<feature type="mutagenesis site" description="Decreases interaction with phosphorylated CD247; when associated with K-190." evidence="27">
    <original>R</original>
    <variation>K</variation>
    <location>
        <position position="37"/>
    </location>
</feature>
<feature type="mutagenesis site" description="Increased constitutive kinase activity." evidence="23">
    <original>W</original>
    <variation>A</variation>
    <location>
        <position position="131"/>
    </location>
</feature>
<feature type="mutagenesis site" description="Increased constitutive kinase activity." evidence="23">
    <original>L</original>
    <variation>A</variation>
    <location>
        <position position="133"/>
    </location>
</feature>
<feature type="mutagenesis site" description="Increased constitutive kinase activity." evidence="23">
    <original>A</original>
    <variation>E</variation>
    <location>
        <position position="141"/>
    </location>
</feature>
<feature type="mutagenesis site" description="Increased kinase activity after activation by LCK." evidence="23">
    <original>S</original>
    <variation>A</variation>
    <location>
        <position position="144"/>
    </location>
</feature>
<feature type="mutagenesis site" description="Increased kinase activity after activation by LCK." evidence="23">
    <original>Q</original>
    <variation>A</variation>
    <location>
        <position position="145"/>
    </location>
</feature>
<feature type="mutagenesis site" description="Increased kinase activity after activation by LCK." evidence="23">
    <original>P</original>
    <variation>A</variation>
    <location>
        <position position="147"/>
    </location>
</feature>
<feature type="mutagenesis site" description="Decreases interaction with phosphorylated CD247; when associated with K-37." evidence="27">
    <original>R</original>
    <variation>K</variation>
    <location>
        <position position="190"/>
    </location>
</feature>
<feature type="mutagenesis site" description="Induces constitutive TCR stimulation-independent NFAT induction." evidence="35">
    <original>Y</original>
    <variation>F</variation>
    <location>
        <position position="292"/>
    </location>
</feature>
<feature type="mutagenesis site" description="No effect on ubiquitination." evidence="28">
    <original>K</original>
    <variation>R</variation>
    <location>
        <position position="304"/>
    </location>
</feature>
<feature type="mutagenesis site" description="Increased constitutive kinase activity.">
    <original>V</original>
    <variation>A</variation>
    <location>
        <position position="314"/>
    </location>
</feature>
<feature type="mutagenesis site" description="Increases strongly constitutive kinase activity on LAT phosphorylation." evidence="27">
    <original>YESPY</original>
    <variation>AESPA</variation>
    <location>
        <begin position="315"/>
        <end position="319"/>
    </location>
</feature>
<feature type="mutagenesis site" description="Increased constitutive kinase activity; when associated with F-319." evidence="7 14 23 36">
    <original>Y</original>
    <variation>A</variation>
    <location>
        <position position="315"/>
    </location>
</feature>
<feature type="mutagenesis site" description="Increased constitutive kinase activity; when associated with F-319. About 75% loss of CD247/CD3Z-binding in stimulated TCR and complete loss of VAV1 interaction." evidence="7 14 23 36">
    <original>Y</original>
    <variation>F</variation>
    <location>
        <position position="315"/>
    </location>
</feature>
<feature type="mutagenesis site" description="Increased constitutive kinase activity; when associated with F-315." evidence="7 23">
    <original>Y</original>
    <variation>A</variation>
    <location>
        <position position="319"/>
    </location>
</feature>
<feature type="mutagenesis site" description="Increased constitutive kinase activity; when associated with F-315. About 80% loss of TCR-induced NFAT activation." evidence="7 23">
    <original>Y</original>
    <variation>F</variation>
    <location>
        <position position="319"/>
    </location>
</feature>
<feature type="mutagenesis site" description="Increases constitutive kinase activity on LAT phosphorylation, strongly increases subcellular localization of CD69 at the cell surface and decreases autoinhibition conformation." evidence="27">
    <original>D</original>
    <variation>P</variation>
    <location>
        <position position="327"/>
    </location>
</feature>
<feature type="mutagenesis site" description="Increases constitutive kinase activity on LAT phosphorylation, strongly increases subcellular localization of CD69 at the cell surface and decreases autoinhibition conformation." evidence="27">
    <original>K</original>
    <variation>E</variation>
    <location>
        <position position="362"/>
    </location>
</feature>
<feature type="mutagenesis site" description="Abolishes kinase activity." evidence="23">
    <original>D</original>
    <variation>N</variation>
    <location>
        <position position="461"/>
    </location>
</feature>
<feature type="mutagenesis site" description="Abolishes kinase activity." evidence="19">
    <original>D</original>
    <variation>N</variation>
    <location>
        <position position="479"/>
    </location>
</feature>
<feature type="mutagenesis site" description="Increases kinase activity." evidence="31">
    <original>Y</original>
    <variation>F</variation>
    <location>
        <position position="492"/>
    </location>
</feature>
<feature type="mutagenesis site" description="Impairs kinase activity." evidence="31">
    <original>Y</original>
    <variation>F</variation>
    <location>
        <position position="493"/>
    </location>
</feature>
<feature type="mutagenesis site" description="No effect on ubiquitination." evidence="28">
    <original>K</original>
    <variation>R</variation>
    <location>
        <position position="538"/>
    </location>
</feature>
<feature type="mutagenesis site" description="Strongly decreased ubiquitination." evidence="28">
    <original>K</original>
    <variation>R</variation>
    <location>
        <position position="544"/>
    </location>
</feature>
<feature type="mutagenesis site" description="Increased kinase activity after activation by LCK." evidence="23">
    <original>Y</original>
    <variation>A</variation>
    <location>
        <position position="597"/>
    </location>
</feature>
<feature type="mutagenesis site" description="Increased kinase activity after activation by LCK." evidence="23">
    <original>Y</original>
    <variation>A</variation>
    <location>
        <position position="598"/>
    </location>
</feature>
<feature type="turn" evidence="48">
    <location>
        <begin position="4"/>
        <end position="7"/>
    </location>
</feature>
<feature type="strand" evidence="46">
    <location>
        <begin position="11"/>
        <end position="14"/>
    </location>
</feature>
<feature type="helix" evidence="48">
    <location>
        <begin position="17"/>
        <end position="26"/>
    </location>
</feature>
<feature type="strand" evidence="48">
    <location>
        <begin position="34"/>
        <end position="38"/>
    </location>
</feature>
<feature type="strand" evidence="48">
    <location>
        <begin position="40"/>
        <end position="42"/>
    </location>
</feature>
<feature type="strand" evidence="48">
    <location>
        <begin position="46"/>
        <end position="52"/>
    </location>
</feature>
<feature type="strand" evidence="48">
    <location>
        <begin position="55"/>
        <end position="63"/>
    </location>
</feature>
<feature type="strand" evidence="48">
    <location>
        <begin position="69"/>
        <end position="71"/>
    </location>
</feature>
<feature type="strand" evidence="48">
    <location>
        <begin position="77"/>
        <end position="79"/>
    </location>
</feature>
<feature type="helix" evidence="48">
    <location>
        <begin position="80"/>
        <end position="89"/>
    </location>
</feature>
<feature type="strand" evidence="48">
    <location>
        <begin position="94"/>
        <end position="96"/>
    </location>
</feature>
<feature type="helix" evidence="48">
    <location>
        <begin position="114"/>
        <end position="131"/>
    </location>
</feature>
<feature type="helix" evidence="48">
    <location>
        <begin position="135"/>
        <end position="156"/>
    </location>
</feature>
<feature type="helix" evidence="48">
    <location>
        <begin position="157"/>
        <end position="160"/>
    </location>
</feature>
<feature type="helix" evidence="48">
    <location>
        <begin position="170"/>
        <end position="178"/>
    </location>
</feature>
<feature type="turn" evidence="46">
    <location>
        <begin position="179"/>
        <end position="181"/>
    </location>
</feature>
<feature type="strand" evidence="48">
    <location>
        <begin position="186"/>
        <end position="191"/>
    </location>
</feature>
<feature type="strand" evidence="48">
    <location>
        <begin position="197"/>
        <end position="204"/>
    </location>
</feature>
<feature type="strand" evidence="48">
    <location>
        <begin position="207"/>
        <end position="215"/>
    </location>
</feature>
<feature type="turn" evidence="51">
    <location>
        <begin position="217"/>
        <end position="219"/>
    </location>
</feature>
<feature type="strand" evidence="48">
    <location>
        <begin position="221"/>
        <end position="223"/>
    </location>
</feature>
<feature type="strand" evidence="48">
    <location>
        <begin position="229"/>
        <end position="231"/>
    </location>
</feature>
<feature type="helix" evidence="48">
    <location>
        <begin position="232"/>
        <end position="241"/>
    </location>
</feature>
<feature type="strand" evidence="48">
    <location>
        <begin position="246"/>
        <end position="248"/>
    </location>
</feature>
<feature type="helix" evidence="50">
    <location>
        <begin position="309"/>
        <end position="311"/>
    </location>
</feature>
<feature type="strand" evidence="49">
    <location>
        <begin position="316"/>
        <end position="320"/>
    </location>
</feature>
<feature type="helix" evidence="50">
    <location>
        <begin position="322"/>
        <end position="326"/>
    </location>
</feature>
<feature type="helix" evidence="47">
    <location>
        <begin position="334"/>
        <end position="336"/>
    </location>
</feature>
<feature type="strand" evidence="47">
    <location>
        <begin position="337"/>
        <end position="345"/>
    </location>
</feature>
<feature type="strand" evidence="47">
    <location>
        <begin position="350"/>
        <end position="357"/>
    </location>
</feature>
<feature type="strand" evidence="47">
    <location>
        <begin position="364"/>
        <end position="371"/>
    </location>
</feature>
<feature type="helix" evidence="47">
    <location>
        <begin position="377"/>
        <end position="392"/>
    </location>
</feature>
<feature type="strand" evidence="47">
    <location>
        <begin position="401"/>
        <end position="415"/>
    </location>
</feature>
<feature type="helix" evidence="47">
    <location>
        <begin position="422"/>
        <end position="426"/>
    </location>
</feature>
<feature type="turn" evidence="47">
    <location>
        <begin position="430"/>
        <end position="432"/>
    </location>
</feature>
<feature type="helix" evidence="47">
    <location>
        <begin position="435"/>
        <end position="454"/>
    </location>
</feature>
<feature type="helix" evidence="47">
    <location>
        <begin position="464"/>
        <end position="466"/>
    </location>
</feature>
<feature type="strand" evidence="47">
    <location>
        <begin position="467"/>
        <end position="471"/>
    </location>
</feature>
<feature type="strand" evidence="47">
    <location>
        <begin position="474"/>
        <end position="477"/>
    </location>
</feature>
<feature type="turn" evidence="49">
    <location>
        <begin position="482"/>
        <end position="485"/>
    </location>
</feature>
<feature type="helix" evidence="47">
    <location>
        <begin position="503"/>
        <end position="505"/>
    </location>
</feature>
<feature type="helix" evidence="47">
    <location>
        <begin position="508"/>
        <end position="513"/>
    </location>
</feature>
<feature type="helix" evidence="47">
    <location>
        <begin position="518"/>
        <end position="533"/>
    </location>
</feature>
<feature type="turn" evidence="50">
    <location>
        <begin position="534"/>
        <end position="536"/>
    </location>
</feature>
<feature type="turn" evidence="47">
    <location>
        <begin position="539"/>
        <end position="542"/>
    </location>
</feature>
<feature type="helix" evidence="47">
    <location>
        <begin position="546"/>
        <end position="553"/>
    </location>
</feature>
<feature type="helix" evidence="47">
    <location>
        <begin position="566"/>
        <end position="574"/>
    </location>
</feature>
<feature type="helix" evidence="47">
    <location>
        <begin position="580"/>
        <end position="582"/>
    </location>
</feature>
<feature type="helix" evidence="47">
    <location>
        <begin position="586"/>
        <end position="601"/>
    </location>
</feature>
<comment type="function">
    <text evidence="12 15 17 26 28 29 32 34 38">Tyrosine kinase that plays an essential role in regulation of the adaptive immune response. Regulates motility, adhesion and cytokine expression of mature T-cells, as well as thymocyte development. Also contributes to the development and activation of primary B-lymphocytes. When antigen presenting cells (APC) activate T-cell receptor (TCR), a serie of phosphorylations lead to the recruitment of ZAP70 to the doubly phosphorylated TCR component CD247/CD3Z through ITAM motif at the plasma membrane. This recruitment serves to localization to the stimulated TCR and to relieve its autoinhibited conformation. Release of ZAP70 active conformation is further stabilized by phosphorylation mediated by LCK. Subsequently, ZAP70 phosphorylates at least 2 essential adapter proteins: LAT and LCP2. In turn, a large number of signaling molecules are recruited and ultimately lead to lymphokine production, T-cell proliferation and differentiation. Furthermore, ZAP70 controls cytoskeleton modifications, adhesion and mobility of T-lymphocytes, thus ensuring correct delivery of effectors to the APC. ZAP70 is also required for TCR-CD247/CD3Z internalization and degradation through interaction with the E3 ubiquitin-protein ligase CBL and adapter proteins SLA and SLA2. Thus, ZAP70 regulates both T-cell activation switch on and switch off by modulating TCR expression at the T-cell surface. During thymocyte development, ZAP70 promotes survival and cell-cycle progression of developing thymocytes before positive selection (when cells are still CD4/CD8 double negative). Additionally, ZAP70-dependent signaling pathway may also contribute to primary B-cells formation and activation through B-cell receptor (BCR).</text>
</comment>
<comment type="catalytic activity">
    <reaction evidence="5 19">
        <text>L-tyrosyl-[protein] + ATP = O-phospho-L-tyrosyl-[protein] + ADP + H(+)</text>
        <dbReference type="Rhea" id="RHEA:10596"/>
        <dbReference type="Rhea" id="RHEA-COMP:10136"/>
        <dbReference type="Rhea" id="RHEA-COMP:20101"/>
        <dbReference type="ChEBI" id="CHEBI:15378"/>
        <dbReference type="ChEBI" id="CHEBI:30616"/>
        <dbReference type="ChEBI" id="CHEBI:46858"/>
        <dbReference type="ChEBI" id="CHEBI:61978"/>
        <dbReference type="ChEBI" id="CHEBI:456216"/>
        <dbReference type="EC" id="2.7.10.2"/>
    </reaction>
</comment>
<comment type="activity regulation">
    <text evidence="19">Activated by phosphorylation at Tyr-493 in the activation loop. Inhibited by staurosporine.</text>
</comment>
<comment type="subunit">
    <text evidence="2 8 9 10 15 16 17 18 25 27 28 30 36">Interacts with CD247/CD3Z; this interaction docks ZAP70 at the stimulated TCR (PubMed:1423621, PubMed:26783323, PubMed:7659156). Interacts with NFAM1 (PubMed:15143214). Interacts with adapter protein SLA; this interaction negatively regulates T-cell receptor signaling (PubMed:10449770). Interacts with FCRL3 (PubMed:12051764, PubMed:19843936). Interacts with VAV1 (PubMed:9151714). Interacts with CBL; this interaction promotes ubiquitination, internalization and subsequent degradation of CD247/CD3Z (PubMed:10078535, PubMed:10449770). Identified in a complex with CBL and UBE2L3 (PubMed:10966114). Interacts with SHB (PubMed:12084069). Interacts with adapter protein SLA2; this interaction negatively regulates T-cell receptor signaling. Interacts with CBLB. Interacts (via SH2 domains) with RHOH; this interaction regulates ZAP70 subcellular localization. Interacts with DEF6 (By similarity). Interacts (ubiquitinated form) with OTUD7B and UBASH3B (PubMed:26903241).</text>
</comment>
<comment type="interaction">
    <interactant intactId="EBI-1211276">
        <id>P43403</id>
    </interactant>
    <interactant intactId="EBI-518228">
        <id>P22681</id>
        <label>CBL</label>
    </interactant>
    <organismsDiffer>false</organismsDiffer>
    <experiments>3</experiments>
</comment>
<comment type="interaction">
    <interactant intactId="EBI-1211276">
        <id>P43403</id>
    </interactant>
    <interactant intactId="EBI-1165705">
        <id>P20963</id>
        <label>CD247</label>
    </interactant>
    <organismsDiffer>false</organismsDiffer>
    <experiments>23</experiments>
</comment>
<comment type="interaction">
    <interactant intactId="EBI-1211276">
        <id>P43403</id>
    </interactant>
    <interactant intactId="EBI-1211297">
        <id>P07766</id>
        <label>CD3E</label>
    </interactant>
    <organismsDiffer>false</organismsDiffer>
    <experiments>3</experiments>
</comment>
<comment type="interaction">
    <interactant intactId="EBI-1211276">
        <id>P43403</id>
    </interactant>
    <interactant intactId="EBI-297353">
        <id>P00533</id>
        <label>EGFR</label>
    </interactant>
    <organismsDiffer>false</organismsDiffer>
    <experiments>3</experiments>
</comment>
<comment type="interaction">
    <interactant intactId="EBI-1211276">
        <id>P43403</id>
    </interactant>
    <interactant intactId="EBI-1379503">
        <id>P10721</id>
        <label>KIT</label>
    </interactant>
    <organismsDiffer>false</organismsDiffer>
    <experiments>2</experiments>
</comment>
<comment type="interaction">
    <interactant intactId="EBI-1211276">
        <id>P43403</id>
    </interactant>
    <interactant intactId="EBI-1348">
        <id>P06239</id>
        <label>LCK</label>
    </interactant>
    <organismsDiffer>false</organismsDiffer>
    <experiments>2</experiments>
</comment>
<comment type="interaction">
    <interactant intactId="EBI-1211276">
        <id>P43403</id>
    </interactant>
    <interactant intactId="EBI-1039152">
        <id>P08581</id>
        <label>MET</label>
    </interactant>
    <organismsDiffer>false</organismsDiffer>
    <experiments>2</experiments>
</comment>
<comment type="interaction">
    <interactant intactId="EBI-1211276">
        <id>P43403</id>
    </interactant>
    <interactant intactId="EBI-1211241">
        <id>Q9Y2R2</id>
        <label>PTPN22</label>
    </interactant>
    <organismsDiffer>false</organismsDiffer>
    <experiments>4</experiments>
</comment>
<comment type="interaction">
    <interactant intactId="EBI-1211276">
        <id>P43403</id>
    </interactant>
    <interactant intactId="EBI-15102259">
        <id>Q8N1K5-1</id>
        <label>THEMIS</label>
    </interactant>
    <organismsDiffer>false</organismsDiffer>
    <experiments>3</experiments>
</comment>
<comment type="interaction">
    <interactant intactId="EBI-1211276">
        <id>P43403</id>
    </interactant>
    <interactant intactId="EBI-8846415">
        <id>Q8BGG7</id>
        <label>Ubash3b</label>
    </interactant>
    <organismsDiffer>true</organismsDiffer>
    <experiments>10</experiments>
</comment>
<comment type="subcellular location">
    <subcellularLocation>
        <location evidence="39">Cytoplasm</location>
    </subcellularLocation>
    <subcellularLocation>
        <location evidence="39">Cell membrane</location>
        <topology evidence="39">Peripheral membrane protein</topology>
    </subcellularLocation>
    <text evidence="1">In quiescent T-lymphocytes, it is cytoplasmic. Upon TCR activation, it is recruited at the plasma membrane by interacting with CD247/CD3Z. Colocalizes together with RHOH in the immunological synapse. RHOH is required for its proper localization to the cell membrane and cytoskeleton fractions in the thymocytes (By similarity).</text>
</comment>
<comment type="alternative products">
    <event type="alternative splicing"/>
    <isoform>
        <id>P43403-1</id>
        <name>1</name>
        <sequence type="displayed"/>
    </isoform>
    <isoform>
        <id>P43403-2</id>
        <name>2</name>
        <name>TZK</name>
        <sequence type="described" ref="VSP_031156"/>
    </isoform>
    <isoform>
        <id>P43403-3</id>
        <name>3</name>
        <sequence type="described" ref="VSP_031157 VSP_031158"/>
    </isoform>
</comment>
<comment type="tissue specificity">
    <text evidence="17 21 37">Expressed in T- and natural killer cells. Also present in early thymocytes and pro/pre B-cells.</text>
</comment>
<comment type="domain">
    <text evidence="1 26">Composed of 2 N-terminal SH2 domains and a C-terminal kinase domain. The tandem SH2 domains bind to the doubly phosphorylated tyrosine-based activation motif (ITAM) of CD247/CD3Z and the non-canonical phosphorylated tyrosine-based activation motif (TAM) of RHOH (By similarity). The interdomain B located between the second SH2 and the kinase domain contains 3 tyrosines (Tyr-292, Tyr-315, Tyr-319) that are phosphorylated following TCR activation. These sites have been implicated in binding to other signaling molecules including CBL or VAV1. Thus, ZAP70 can also function as a scaffold by recruiting additional factors to the stimulated TCR complex.</text>
</comment>
<comment type="PTM">
    <text evidence="7 17 20 35">Phosphorylated on tyrosine residues upon T-cell antigen receptor (TCR) stimulation. Phosphorylation of Tyr-315 and Tyr-319 are essential for ZAP70 positive function on T-lymphocyte activation whereas Tyr-292 has a negative regulatory role. Within the C-terminal kinase domain, Tyr-492 and Tyr-493 are phosphorylated after TCR induction, Tyr-492 playing a negative regulatory role and Tyr-493 a positive. Tyr-493 is dephosphorylated by PTN22.</text>
</comment>
<comment type="PTM">
    <text evidence="28">Ubiquitinated in response to T cell activation. Deubiquitinated by OTUD7B.</text>
</comment>
<comment type="disease" evidence="11 13 24 32 33">
    <disease id="DI-02295">
        <name>Immunodeficiency 48</name>
        <acronym>IMD48</acronym>
        <description>A form of severe immunodeficiency characterized by a selective absence of CD8+ T-cells.</description>
        <dbReference type="MIM" id="269840"/>
    </disease>
    <text>The disease is caused by variants affecting the gene represented in this entry.</text>
</comment>
<comment type="disease" evidence="27">
    <disease id="DI-04749">
        <name>Autoimmune disease, multisystem, infantile-onset, 2</name>
        <acronym>ADMIO2</acronym>
        <description>An autosomal recessive, autoimmune disorder characterized by systemic manifestations including blistering skin disease, uncontrollable bullous pemphigoid, inflammatory colitis, autoimmune hypothyroidism, proteinuria and nephrotic syndrome.</description>
        <dbReference type="MIM" id="617006"/>
    </disease>
    <text>The disease is caused by variants affecting the gene represented in this entry.</text>
</comment>
<comment type="similarity">
    <text evidence="3">Belongs to the protein kinase superfamily. Tyr protein kinase family. SYK/ZAP-70 subfamily.</text>
</comment>
<comment type="online information" name="ZAP70base">
    <link uri="https://databases.lovd.nl/shared/genes/ZAP70"/>
    <text>ZAP70 mutation db</text>
</comment>
<evidence type="ECO:0000250" key="1"/>
<evidence type="ECO:0000250" key="2">
    <source>
        <dbReference type="UniProtKB" id="P43404"/>
    </source>
</evidence>
<evidence type="ECO:0000255" key="3">
    <source>
        <dbReference type="PROSITE-ProRule" id="PRU00159"/>
    </source>
</evidence>
<evidence type="ECO:0000255" key="4">
    <source>
        <dbReference type="PROSITE-ProRule" id="PRU00191"/>
    </source>
</evidence>
<evidence type="ECO:0000255" key="5">
    <source>
        <dbReference type="PROSITE-ProRule" id="PRU10028"/>
    </source>
</evidence>
<evidence type="ECO:0000256" key="6">
    <source>
        <dbReference type="SAM" id="MobiDB-lite"/>
    </source>
</evidence>
<evidence type="ECO:0000269" key="7">
    <source>
    </source>
</evidence>
<evidence type="ECO:0000269" key="8">
    <source>
    </source>
</evidence>
<evidence type="ECO:0000269" key="9">
    <source>
    </source>
</evidence>
<evidence type="ECO:0000269" key="10">
    <source>
    </source>
</evidence>
<evidence type="ECO:0000269" key="11">
    <source>
    </source>
</evidence>
<evidence type="ECO:0000269" key="12">
    <source>
    </source>
</evidence>
<evidence type="ECO:0000269" key="13">
    <source>
    </source>
</evidence>
<evidence type="ECO:0000269" key="14">
    <source>
    </source>
</evidence>
<evidence type="ECO:0000269" key="15">
    <source>
    </source>
</evidence>
<evidence type="ECO:0000269" key="16">
    <source>
    </source>
</evidence>
<evidence type="ECO:0000269" key="17">
    <source>
    </source>
</evidence>
<evidence type="ECO:0000269" key="18">
    <source>
    </source>
</evidence>
<evidence type="ECO:0000269" key="19">
    <source>
    </source>
</evidence>
<evidence type="ECO:0000269" key="20">
    <source>
    </source>
</evidence>
<evidence type="ECO:0000269" key="21">
    <source>
    </source>
</evidence>
<evidence type="ECO:0000269" key="22">
    <source>
    </source>
</evidence>
<evidence type="ECO:0000269" key="23">
    <source>
    </source>
</evidence>
<evidence type="ECO:0000269" key="24">
    <source>
    </source>
</evidence>
<evidence type="ECO:0000269" key="25">
    <source>
    </source>
</evidence>
<evidence type="ECO:0000269" key="26">
    <source>
    </source>
</evidence>
<evidence type="ECO:0000269" key="27">
    <source>
    </source>
</evidence>
<evidence type="ECO:0000269" key="28">
    <source>
    </source>
</evidence>
<evidence type="ECO:0000269" key="29">
    <source>
    </source>
</evidence>
<evidence type="ECO:0000269" key="30">
    <source>
    </source>
</evidence>
<evidence type="ECO:0000269" key="31">
    <source>
    </source>
</evidence>
<evidence type="ECO:0000269" key="32">
    <source>
    </source>
</evidence>
<evidence type="ECO:0000269" key="33">
    <source>
    </source>
</evidence>
<evidence type="ECO:0000269" key="34">
    <source>
    </source>
</evidence>
<evidence type="ECO:0000269" key="35">
    <source>
    </source>
</evidence>
<evidence type="ECO:0000269" key="36">
    <source>
    </source>
</evidence>
<evidence type="ECO:0000269" key="37">
    <source>
    </source>
</evidence>
<evidence type="ECO:0000269" key="38">
    <source>
    </source>
</evidence>
<evidence type="ECO:0000269" key="39">
    <source>
    </source>
</evidence>
<evidence type="ECO:0000303" key="40">
    <source>
    </source>
</evidence>
<evidence type="ECO:0000303" key="41">
    <source>
    </source>
</evidence>
<evidence type="ECO:0007744" key="42">
    <source>
    </source>
</evidence>
<evidence type="ECO:0007744" key="43">
    <source>
    </source>
</evidence>
<evidence type="ECO:0007744" key="44">
    <source>
    </source>
</evidence>
<evidence type="ECO:0007744" key="45">
    <source>
    </source>
</evidence>
<evidence type="ECO:0007829" key="46">
    <source>
        <dbReference type="PDB" id="1M61"/>
    </source>
</evidence>
<evidence type="ECO:0007829" key="47">
    <source>
        <dbReference type="PDB" id="1U59"/>
    </source>
</evidence>
<evidence type="ECO:0007829" key="48">
    <source>
        <dbReference type="PDB" id="2OQ1"/>
    </source>
</evidence>
<evidence type="ECO:0007829" key="49">
    <source>
        <dbReference type="PDB" id="2OZO"/>
    </source>
</evidence>
<evidence type="ECO:0007829" key="50">
    <source>
        <dbReference type="PDB" id="4K2R"/>
    </source>
</evidence>
<evidence type="ECO:0007829" key="51">
    <source>
        <dbReference type="PDB" id="4XZ1"/>
    </source>
</evidence>